<organism>
    <name type="scientific">Homo sapiens</name>
    <name type="common">Human</name>
    <dbReference type="NCBI Taxonomy" id="9606"/>
    <lineage>
        <taxon>Eukaryota</taxon>
        <taxon>Metazoa</taxon>
        <taxon>Chordata</taxon>
        <taxon>Craniata</taxon>
        <taxon>Vertebrata</taxon>
        <taxon>Euteleostomi</taxon>
        <taxon>Mammalia</taxon>
        <taxon>Eutheria</taxon>
        <taxon>Euarchontoglires</taxon>
        <taxon>Primates</taxon>
        <taxon>Haplorrhini</taxon>
        <taxon>Catarrhini</taxon>
        <taxon>Hominidae</taxon>
        <taxon>Homo</taxon>
    </lineage>
</organism>
<keyword id="KW-0002">3D-structure</keyword>
<keyword id="KW-0025">Alternative splicing</keyword>
<keyword id="KW-0068">Autocatalytic cleavage</keyword>
<keyword id="KW-0165">Cleavage on pair of basic residues</keyword>
<keyword id="KW-0963">Cytoplasm</keyword>
<keyword id="KW-0903">Direct protein sequencing</keyword>
<keyword id="KW-1015">Disulfide bond</keyword>
<keyword id="KW-0256">Endoplasmic reticulum</keyword>
<keyword id="KW-0325">Glycoprotein</keyword>
<keyword id="KW-0378">Hydrolase</keyword>
<keyword id="KW-0492">Microsome</keyword>
<keyword id="KW-0496">Mitochondrion</keyword>
<keyword id="KW-0539">Nucleus</keyword>
<keyword id="KW-0645">Protease</keyword>
<keyword id="KW-1267">Proteomics identification</keyword>
<keyword id="KW-1185">Reference proteome</keyword>
<keyword id="KW-0964">Secreted</keyword>
<keyword id="KW-0720">Serine protease</keyword>
<keyword id="KW-0732">Signal</keyword>
<keyword id="KW-0865">Zymogen</keyword>
<accession>Q92876</accession>
<accession>A6NJA1</accession>
<accession>A8MW09</accession>
<accession>Q6H301</accession>
<sequence length="244" mass="26856">MKKLMVVLSLIAAAWAEEQNKLVHGGPCDKTSHPYQAALYTSGHLLCGGVLIHPLWVLTAAHCKKPNLQVFLGKHNLRQRESSQEQSSVVRAVIHPDYDAASHDQDIMLLRLARPAKLSELIQPLPLERDCSANTTSCHILGWGKTADGDFPDTIQCAYIHLVSREECEHAYPGQITQNMLCAGDEKYGKDSCQGDSGGPLVCGDHLRGLVSWGNIPCGSKEKPGVYTNVCRYTNWIQKTIQAK</sequence>
<protein>
    <recommendedName>
        <fullName>Kallikrein-6</fullName>
        <ecNumber>3.4.21.-</ecNumber>
    </recommendedName>
    <alternativeName>
        <fullName>Neurosin</fullName>
    </alternativeName>
    <alternativeName>
        <fullName>Protease M</fullName>
    </alternativeName>
    <alternativeName>
        <fullName>SP59</fullName>
    </alternativeName>
    <alternativeName>
        <fullName>Serine protease 18</fullName>
    </alternativeName>
    <alternativeName>
        <fullName>Serine protease 9</fullName>
    </alternativeName>
    <alternativeName>
        <fullName>Zyme</fullName>
    </alternativeName>
</protein>
<dbReference type="EC" id="3.4.21.-"/>
<dbReference type="EMBL" id="U62801">
    <property type="protein sequence ID" value="AAB07113.1"/>
    <property type="molecule type" value="mRNA"/>
</dbReference>
<dbReference type="EMBL" id="D78203">
    <property type="protein sequence ID" value="BAA11306.1"/>
    <property type="molecule type" value="mRNA"/>
</dbReference>
<dbReference type="EMBL" id="AF013988">
    <property type="protein sequence ID" value="AAB66483.1"/>
    <property type="molecule type" value="mRNA"/>
</dbReference>
<dbReference type="EMBL" id="AF149289">
    <property type="protein sequence ID" value="AAD51475.1"/>
    <property type="molecule type" value="Genomic_DNA"/>
</dbReference>
<dbReference type="EMBL" id="AF243527">
    <property type="protein sequence ID" value="AAG33359.1"/>
    <property type="molecule type" value="Genomic_DNA"/>
</dbReference>
<dbReference type="EMBL" id="AY318867">
    <property type="protein sequence ID" value="AAP82446.1"/>
    <property type="molecule type" value="mRNA"/>
</dbReference>
<dbReference type="EMBL" id="AY318868">
    <property type="status" value="NOT_ANNOTATED_CDS"/>
    <property type="molecule type" value="mRNA"/>
</dbReference>
<dbReference type="EMBL" id="AY318869">
    <property type="protein sequence ID" value="AAP82448.1"/>
    <property type="molecule type" value="mRNA"/>
</dbReference>
<dbReference type="EMBL" id="AY318870">
    <property type="status" value="NOT_ANNOTATED_CDS"/>
    <property type="molecule type" value="mRNA"/>
</dbReference>
<dbReference type="EMBL" id="DQ223012">
    <property type="protein sequence ID" value="ABB04464.1"/>
    <property type="molecule type" value="mRNA"/>
</dbReference>
<dbReference type="EMBL" id="AK314897">
    <property type="protein sequence ID" value="BAG37411.1"/>
    <property type="molecule type" value="mRNA"/>
</dbReference>
<dbReference type="EMBL" id="BT006852">
    <property type="protein sequence ID" value="AAP35498.1"/>
    <property type="molecule type" value="mRNA"/>
</dbReference>
<dbReference type="EMBL" id="AC011483">
    <property type="status" value="NOT_ANNOTATED_CDS"/>
    <property type="molecule type" value="Genomic_DNA"/>
</dbReference>
<dbReference type="EMBL" id="CH471135">
    <property type="protein sequence ID" value="EAW71953.1"/>
    <property type="molecule type" value="Genomic_DNA"/>
</dbReference>
<dbReference type="EMBL" id="CH471135">
    <property type="protein sequence ID" value="EAW71954.1"/>
    <property type="molecule type" value="Genomic_DNA"/>
</dbReference>
<dbReference type="EMBL" id="BC015525">
    <property type="protein sequence ID" value="AAH15525.1"/>
    <property type="molecule type" value="mRNA"/>
</dbReference>
<dbReference type="CCDS" id="CCDS12811.1">
    <molecule id="Q92876-1"/>
</dbReference>
<dbReference type="CCDS" id="CCDS42599.1">
    <molecule id="Q92876-2"/>
</dbReference>
<dbReference type="RefSeq" id="NP_001012982.1">
    <molecule id="Q92876-1"/>
    <property type="nucleotide sequence ID" value="NM_001012964.3"/>
</dbReference>
<dbReference type="RefSeq" id="NP_001012983.1">
    <molecule id="Q92876-2"/>
    <property type="nucleotide sequence ID" value="NM_001012965.3"/>
</dbReference>
<dbReference type="RefSeq" id="NP_001306877.1">
    <molecule id="Q92876-2"/>
    <property type="nucleotide sequence ID" value="NM_001319948.2"/>
</dbReference>
<dbReference type="RefSeq" id="NP_001306878.1">
    <molecule id="Q92876-2"/>
    <property type="nucleotide sequence ID" value="NM_001319949.2"/>
</dbReference>
<dbReference type="RefSeq" id="NP_002765.1">
    <molecule id="Q92876-1"/>
    <property type="nucleotide sequence ID" value="NM_002774.4"/>
</dbReference>
<dbReference type="RefSeq" id="XP_024307379.1">
    <molecule id="Q92876-2"/>
    <property type="nucleotide sequence ID" value="XM_024451611.2"/>
</dbReference>
<dbReference type="PDB" id="1GVL">
    <property type="method" value="X-ray"/>
    <property type="resolution" value="1.80 A"/>
    <property type="chains" value="A=21-243"/>
</dbReference>
<dbReference type="PDB" id="1L2E">
    <property type="method" value="X-ray"/>
    <property type="resolution" value="1.75 A"/>
    <property type="chains" value="A=22-244"/>
</dbReference>
<dbReference type="PDB" id="1LO6">
    <property type="method" value="X-ray"/>
    <property type="resolution" value="1.56 A"/>
    <property type="chains" value="A=22-244"/>
</dbReference>
<dbReference type="PDB" id="3VFE">
    <property type="method" value="X-ray"/>
    <property type="resolution" value="1.88 A"/>
    <property type="chains" value="A=22-244"/>
</dbReference>
<dbReference type="PDB" id="4D8N">
    <property type="method" value="X-ray"/>
    <property type="resolution" value="1.68 A"/>
    <property type="chains" value="A=22-244"/>
</dbReference>
<dbReference type="PDB" id="5NX1">
    <property type="method" value="X-ray"/>
    <property type="resolution" value="1.85 A"/>
    <property type="chains" value="A=22-244"/>
</dbReference>
<dbReference type="PDB" id="5NX3">
    <property type="method" value="X-ray"/>
    <property type="resolution" value="2.30 A"/>
    <property type="chains" value="A=22-244"/>
</dbReference>
<dbReference type="PDB" id="6QFF">
    <property type="method" value="X-ray"/>
    <property type="resolution" value="1.64 A"/>
    <property type="chains" value="A/B=22-243"/>
</dbReference>
<dbReference type="PDB" id="6QFG">
    <property type="method" value="X-ray"/>
    <property type="resolution" value="1.68 A"/>
    <property type="chains" value="A/B=22-244"/>
</dbReference>
<dbReference type="PDB" id="6QFH">
    <property type="method" value="X-ray"/>
    <property type="resolution" value="1.65 A"/>
    <property type="chains" value="A/B=22-243"/>
</dbReference>
<dbReference type="PDB" id="6QH9">
    <property type="method" value="X-ray"/>
    <property type="resolution" value="2.27 A"/>
    <property type="chains" value="A/B=22-244"/>
</dbReference>
<dbReference type="PDB" id="6QHA">
    <property type="method" value="X-ray"/>
    <property type="resolution" value="1.82 A"/>
    <property type="chains" value="A/B=22-244"/>
</dbReference>
<dbReference type="PDB" id="6QHB">
    <property type="method" value="X-ray"/>
    <property type="resolution" value="1.84 A"/>
    <property type="chains" value="A/B=22-244"/>
</dbReference>
<dbReference type="PDB" id="6QHC">
    <property type="method" value="X-ray"/>
    <property type="resolution" value="1.87 A"/>
    <property type="chains" value="A/B=22-244"/>
</dbReference>
<dbReference type="PDB" id="6SKB">
    <property type="method" value="X-ray"/>
    <property type="resolution" value="1.84 A"/>
    <property type="chains" value="A/B/C=12-244"/>
</dbReference>
<dbReference type="PDB" id="6SKC">
    <property type="method" value="X-ray"/>
    <property type="resolution" value="2.18 A"/>
    <property type="chains" value="A/B=22-244"/>
</dbReference>
<dbReference type="PDB" id="6SKD">
    <property type="method" value="X-ray"/>
    <property type="resolution" value="2.26 A"/>
    <property type="chains" value="A/B=22-244"/>
</dbReference>
<dbReference type="PDB" id="7QFT">
    <property type="method" value="X-ray"/>
    <property type="resolution" value="1.47 A"/>
    <property type="chains" value="A/B=22-244"/>
</dbReference>
<dbReference type="PDB" id="7QFV">
    <property type="method" value="X-ray"/>
    <property type="resolution" value="1.56 A"/>
    <property type="chains" value="A/B=22-244"/>
</dbReference>
<dbReference type="PDB" id="7QHZ">
    <property type="method" value="X-ray"/>
    <property type="resolution" value="1.50 A"/>
    <property type="chains" value="A=22-244"/>
</dbReference>
<dbReference type="PDB" id="7QI0">
    <property type="method" value="X-ray"/>
    <property type="resolution" value="1.88 A"/>
    <property type="chains" value="A/B=22-244"/>
</dbReference>
<dbReference type="PDBsum" id="1GVL"/>
<dbReference type="PDBsum" id="1L2E"/>
<dbReference type="PDBsum" id="1LO6"/>
<dbReference type="PDBsum" id="3VFE"/>
<dbReference type="PDBsum" id="4D8N"/>
<dbReference type="PDBsum" id="5NX1"/>
<dbReference type="PDBsum" id="5NX3"/>
<dbReference type="PDBsum" id="6QFF"/>
<dbReference type="PDBsum" id="6QFG"/>
<dbReference type="PDBsum" id="6QFH"/>
<dbReference type="PDBsum" id="6QH9"/>
<dbReference type="PDBsum" id="6QHA"/>
<dbReference type="PDBsum" id="6QHB"/>
<dbReference type="PDBsum" id="6QHC"/>
<dbReference type="PDBsum" id="6SKB"/>
<dbReference type="PDBsum" id="6SKC"/>
<dbReference type="PDBsum" id="6SKD"/>
<dbReference type="PDBsum" id="7QFT"/>
<dbReference type="PDBsum" id="7QFV"/>
<dbReference type="PDBsum" id="7QHZ"/>
<dbReference type="PDBsum" id="7QI0"/>
<dbReference type="SMR" id="Q92876"/>
<dbReference type="BioGRID" id="111634">
    <property type="interactions" value="63"/>
</dbReference>
<dbReference type="CORUM" id="Q92876"/>
<dbReference type="FunCoup" id="Q92876">
    <property type="interactions" value="77"/>
</dbReference>
<dbReference type="IntAct" id="Q92876">
    <property type="interactions" value="186"/>
</dbReference>
<dbReference type="MINT" id="Q92876"/>
<dbReference type="STRING" id="9606.ENSP00000366047"/>
<dbReference type="BindingDB" id="Q92876"/>
<dbReference type="ChEMBL" id="CHEMBL4448"/>
<dbReference type="DrugBank" id="DB03127">
    <property type="generic name" value="Benzamidine"/>
</dbReference>
<dbReference type="GuidetoPHARMACOLOGY" id="2376"/>
<dbReference type="MEROPS" id="S01.236"/>
<dbReference type="GlyConnect" id="2937">
    <property type="glycosylation" value="2 N-Linked glycans (1 site)"/>
</dbReference>
<dbReference type="GlyCosmos" id="Q92876">
    <property type="glycosylation" value="1 site, 18 glycans"/>
</dbReference>
<dbReference type="GlyGen" id="Q92876">
    <property type="glycosylation" value="1 site, 18 N-linked glycans (1 site)"/>
</dbReference>
<dbReference type="iPTMnet" id="Q92876"/>
<dbReference type="PhosphoSitePlus" id="Q92876"/>
<dbReference type="BioMuta" id="KLK6"/>
<dbReference type="DMDM" id="3914480"/>
<dbReference type="jPOST" id="Q92876"/>
<dbReference type="MassIVE" id="Q92876"/>
<dbReference type="PaxDb" id="9606-ENSP00000366047"/>
<dbReference type="PeptideAtlas" id="Q92876"/>
<dbReference type="ProteomicsDB" id="75559">
    <molecule id="Q92876-1"/>
</dbReference>
<dbReference type="ProteomicsDB" id="75560">
    <molecule id="Q92876-2"/>
</dbReference>
<dbReference type="Pumba" id="Q92876"/>
<dbReference type="Antibodypedia" id="32402">
    <property type="antibodies" value="344 antibodies from 33 providers"/>
</dbReference>
<dbReference type="DNASU" id="5653"/>
<dbReference type="Ensembl" id="ENST00000310157.7">
    <molecule id="Q92876-1"/>
    <property type="protein sequence ID" value="ENSP00000309148.1"/>
    <property type="gene ID" value="ENSG00000167755.15"/>
</dbReference>
<dbReference type="Ensembl" id="ENST00000376851.7">
    <molecule id="Q92876-1"/>
    <property type="protein sequence ID" value="ENSP00000366047.2"/>
    <property type="gene ID" value="ENSG00000167755.15"/>
</dbReference>
<dbReference type="Ensembl" id="ENST00000391808.5">
    <molecule id="Q92876-2"/>
    <property type="protein sequence ID" value="ENSP00000375684.1"/>
    <property type="gene ID" value="ENSG00000167755.15"/>
</dbReference>
<dbReference type="Ensembl" id="ENST00000594641.1">
    <molecule id="Q92876-1"/>
    <property type="protein sequence ID" value="ENSP00000470482.1"/>
    <property type="gene ID" value="ENSG00000167755.15"/>
</dbReference>
<dbReference type="Ensembl" id="ENST00000597379.5">
    <molecule id="Q92876-3"/>
    <property type="protein sequence ID" value="ENSP00000469630.1"/>
    <property type="gene ID" value="ENSG00000167755.15"/>
</dbReference>
<dbReference type="Ensembl" id="ENST00000599881.5">
    <molecule id="Q92876-3"/>
    <property type="protein sequence ID" value="ENSP00000471948.1"/>
    <property type="gene ID" value="ENSG00000167755.15"/>
</dbReference>
<dbReference type="GeneID" id="5653"/>
<dbReference type="KEGG" id="hsa:5653"/>
<dbReference type="MANE-Select" id="ENST00000310157.7">
    <property type="protein sequence ID" value="ENSP00000309148.1"/>
    <property type="RefSeq nucleotide sequence ID" value="NM_002774.4"/>
    <property type="RefSeq protein sequence ID" value="NP_002765.1"/>
</dbReference>
<dbReference type="UCSC" id="uc002pui.4">
    <molecule id="Q92876-1"/>
    <property type="organism name" value="human"/>
</dbReference>
<dbReference type="AGR" id="HGNC:6367"/>
<dbReference type="CTD" id="5653"/>
<dbReference type="DisGeNET" id="5653"/>
<dbReference type="GeneCards" id="KLK6"/>
<dbReference type="HGNC" id="HGNC:6367">
    <property type="gene designation" value="KLK6"/>
</dbReference>
<dbReference type="HPA" id="ENSG00000167755">
    <property type="expression patterns" value="Tissue enriched (brain)"/>
</dbReference>
<dbReference type="MIM" id="602652">
    <property type="type" value="gene"/>
</dbReference>
<dbReference type="neXtProt" id="NX_Q92876"/>
<dbReference type="OpenTargets" id="ENSG00000167755"/>
<dbReference type="PharmGKB" id="PA30156"/>
<dbReference type="VEuPathDB" id="HostDB:ENSG00000167755"/>
<dbReference type="eggNOG" id="KOG3627">
    <property type="taxonomic scope" value="Eukaryota"/>
</dbReference>
<dbReference type="GeneTree" id="ENSGT01030000234551"/>
<dbReference type="HOGENOM" id="CLU_006842_1_1_1"/>
<dbReference type="InParanoid" id="Q92876"/>
<dbReference type="OMA" id="RHDNDIM"/>
<dbReference type="OrthoDB" id="10059102at2759"/>
<dbReference type="PAN-GO" id="Q92876">
    <property type="GO annotations" value="1 GO annotation based on evolutionary models"/>
</dbReference>
<dbReference type="PhylomeDB" id="Q92876"/>
<dbReference type="TreeFam" id="TF331065"/>
<dbReference type="BRENDA" id="3.4.21.104">
    <property type="organism ID" value="2681"/>
</dbReference>
<dbReference type="BRENDA" id="3.4.21.34">
    <property type="organism ID" value="2681"/>
</dbReference>
<dbReference type="BRENDA" id="3.4.21.B10">
    <property type="organism ID" value="2681"/>
</dbReference>
<dbReference type="PathwayCommons" id="Q92876"/>
<dbReference type="SABIO-RK" id="Q92876"/>
<dbReference type="SignaLink" id="Q92876"/>
<dbReference type="BioGRID-ORCS" id="5653">
    <property type="hits" value="20 hits in 1159 CRISPR screens"/>
</dbReference>
<dbReference type="ChiTaRS" id="KLK6">
    <property type="organism name" value="human"/>
</dbReference>
<dbReference type="EvolutionaryTrace" id="Q92876"/>
<dbReference type="GeneWiki" id="KLK6"/>
<dbReference type="GenomeRNAi" id="5653"/>
<dbReference type="Pharos" id="Q92876">
    <property type="development level" value="Tchem"/>
</dbReference>
<dbReference type="PRO" id="PR:Q92876"/>
<dbReference type="Proteomes" id="UP000005640">
    <property type="component" value="Chromosome 19"/>
</dbReference>
<dbReference type="RNAct" id="Q92876">
    <property type="molecule type" value="protein"/>
</dbReference>
<dbReference type="Bgee" id="ENSG00000167755">
    <property type="expression patterns" value="Expressed in C1 segment of cervical spinal cord and 145 other cell types or tissues"/>
</dbReference>
<dbReference type="ExpressionAtlas" id="Q92876">
    <property type="expression patterns" value="baseline and differential"/>
</dbReference>
<dbReference type="GO" id="GO:0001533">
    <property type="term" value="C:cornified envelope"/>
    <property type="evidence" value="ECO:0007669"/>
    <property type="project" value="Ensembl"/>
</dbReference>
<dbReference type="GO" id="GO:0005737">
    <property type="term" value="C:cytoplasm"/>
    <property type="evidence" value="ECO:0000314"/>
    <property type="project" value="UniProtKB"/>
</dbReference>
<dbReference type="GO" id="GO:0005783">
    <property type="term" value="C:endoplasmic reticulum"/>
    <property type="evidence" value="ECO:0007669"/>
    <property type="project" value="UniProtKB-KW"/>
</dbReference>
<dbReference type="GO" id="GO:0005576">
    <property type="term" value="C:extracellular region"/>
    <property type="evidence" value="ECO:0000314"/>
    <property type="project" value="UniProtKB"/>
</dbReference>
<dbReference type="GO" id="GO:0005615">
    <property type="term" value="C:extracellular space"/>
    <property type="evidence" value="ECO:0007005"/>
    <property type="project" value="UniProtKB"/>
</dbReference>
<dbReference type="GO" id="GO:0045171">
    <property type="term" value="C:intercellular bridge"/>
    <property type="evidence" value="ECO:0000314"/>
    <property type="project" value="HPA"/>
</dbReference>
<dbReference type="GO" id="GO:0005739">
    <property type="term" value="C:mitochondrion"/>
    <property type="evidence" value="ECO:0007669"/>
    <property type="project" value="UniProtKB-SubCell"/>
</dbReference>
<dbReference type="GO" id="GO:0031965">
    <property type="term" value="C:nuclear membrane"/>
    <property type="evidence" value="ECO:0000314"/>
    <property type="project" value="HPA"/>
</dbReference>
<dbReference type="GO" id="GO:0005730">
    <property type="term" value="C:nucleolus"/>
    <property type="evidence" value="ECO:0007669"/>
    <property type="project" value="UniProtKB-SubCell"/>
</dbReference>
<dbReference type="GO" id="GO:0005654">
    <property type="term" value="C:nucleoplasm"/>
    <property type="evidence" value="ECO:0000314"/>
    <property type="project" value="HPA"/>
</dbReference>
<dbReference type="GO" id="GO:0030141">
    <property type="term" value="C:secretory granule"/>
    <property type="evidence" value="ECO:0000318"/>
    <property type="project" value="GO_Central"/>
</dbReference>
<dbReference type="GO" id="GO:0004252">
    <property type="term" value="F:serine-type endopeptidase activity"/>
    <property type="evidence" value="ECO:0000314"/>
    <property type="project" value="UniProtKB"/>
</dbReference>
<dbReference type="GO" id="GO:0042982">
    <property type="term" value="P:amyloid precursor protein metabolic process"/>
    <property type="evidence" value="ECO:0000303"/>
    <property type="project" value="UniProtKB"/>
</dbReference>
<dbReference type="GO" id="GO:0007417">
    <property type="term" value="P:central nervous system development"/>
    <property type="evidence" value="ECO:0000303"/>
    <property type="project" value="UniProtKB"/>
</dbReference>
<dbReference type="GO" id="GO:0030574">
    <property type="term" value="P:collagen catabolic process"/>
    <property type="evidence" value="ECO:0000303"/>
    <property type="project" value="UniProtKB"/>
</dbReference>
<dbReference type="GO" id="GO:0042445">
    <property type="term" value="P:hormone metabolic process"/>
    <property type="evidence" value="ECO:0000303"/>
    <property type="project" value="UniProtKB"/>
</dbReference>
<dbReference type="GO" id="GO:0042552">
    <property type="term" value="P:myelination"/>
    <property type="evidence" value="ECO:0000303"/>
    <property type="project" value="UniProtKB"/>
</dbReference>
<dbReference type="GO" id="GO:0045745">
    <property type="term" value="P:positive regulation of G protein-coupled receptor signaling pathway"/>
    <property type="evidence" value="ECO:0000314"/>
    <property type="project" value="UniProtKB"/>
</dbReference>
<dbReference type="GO" id="GO:0016540">
    <property type="term" value="P:protein autoprocessing"/>
    <property type="evidence" value="ECO:0000303"/>
    <property type="project" value="UniProtKB"/>
</dbReference>
<dbReference type="GO" id="GO:0051604">
    <property type="term" value="P:protein maturation"/>
    <property type="evidence" value="ECO:0000318"/>
    <property type="project" value="GO_Central"/>
</dbReference>
<dbReference type="GO" id="GO:0045595">
    <property type="term" value="P:regulation of cell differentiation"/>
    <property type="evidence" value="ECO:0000303"/>
    <property type="project" value="UniProtKB"/>
</dbReference>
<dbReference type="GO" id="GO:0010975">
    <property type="term" value="P:regulation of neuron projection development"/>
    <property type="evidence" value="ECO:0007669"/>
    <property type="project" value="Ensembl"/>
</dbReference>
<dbReference type="GO" id="GO:0009611">
    <property type="term" value="P:response to wounding"/>
    <property type="evidence" value="ECO:0000303"/>
    <property type="project" value="UniProtKB"/>
</dbReference>
<dbReference type="GO" id="GO:0042246">
    <property type="term" value="P:tissue regeneration"/>
    <property type="evidence" value="ECO:0000303"/>
    <property type="project" value="UniProtKB"/>
</dbReference>
<dbReference type="CDD" id="cd00190">
    <property type="entry name" value="Tryp_SPc"/>
    <property type="match status" value="1"/>
</dbReference>
<dbReference type="FunFam" id="2.40.10.10:FF:000088">
    <property type="entry name" value="kallikrein-6 isoform X1"/>
    <property type="match status" value="1"/>
</dbReference>
<dbReference type="FunFam" id="2.40.10.10:FF:000041">
    <property type="entry name" value="kallikrein-6 isoform X2"/>
    <property type="match status" value="1"/>
</dbReference>
<dbReference type="Gene3D" id="2.40.10.10">
    <property type="entry name" value="Trypsin-like serine proteases"/>
    <property type="match status" value="2"/>
</dbReference>
<dbReference type="InterPro" id="IPR009003">
    <property type="entry name" value="Peptidase_S1_PA"/>
</dbReference>
<dbReference type="InterPro" id="IPR043504">
    <property type="entry name" value="Peptidase_S1_PA_chymotrypsin"/>
</dbReference>
<dbReference type="InterPro" id="IPR001314">
    <property type="entry name" value="Peptidase_S1A"/>
</dbReference>
<dbReference type="InterPro" id="IPR001254">
    <property type="entry name" value="Trypsin_dom"/>
</dbReference>
<dbReference type="InterPro" id="IPR018114">
    <property type="entry name" value="TRYPSIN_HIS"/>
</dbReference>
<dbReference type="InterPro" id="IPR033116">
    <property type="entry name" value="TRYPSIN_SER"/>
</dbReference>
<dbReference type="PANTHER" id="PTHR24271:SF19">
    <property type="entry name" value="KALLIKREIN-6"/>
    <property type="match status" value="1"/>
</dbReference>
<dbReference type="PANTHER" id="PTHR24271">
    <property type="entry name" value="KALLIKREIN-RELATED"/>
    <property type="match status" value="1"/>
</dbReference>
<dbReference type="Pfam" id="PF00089">
    <property type="entry name" value="Trypsin"/>
    <property type="match status" value="1"/>
</dbReference>
<dbReference type="PRINTS" id="PR00722">
    <property type="entry name" value="CHYMOTRYPSIN"/>
</dbReference>
<dbReference type="SMART" id="SM00020">
    <property type="entry name" value="Tryp_SPc"/>
    <property type="match status" value="1"/>
</dbReference>
<dbReference type="SUPFAM" id="SSF50494">
    <property type="entry name" value="Trypsin-like serine proteases"/>
    <property type="match status" value="1"/>
</dbReference>
<dbReference type="PROSITE" id="PS50240">
    <property type="entry name" value="TRYPSIN_DOM"/>
    <property type="match status" value="1"/>
</dbReference>
<dbReference type="PROSITE" id="PS00134">
    <property type="entry name" value="TRYPSIN_HIS"/>
    <property type="match status" value="1"/>
</dbReference>
<dbReference type="PROSITE" id="PS00135">
    <property type="entry name" value="TRYPSIN_SER"/>
    <property type="match status" value="1"/>
</dbReference>
<comment type="function">
    <text evidence="6 8 9 10 11 13">Serine protease which exhibits a preference for Arg over Lys in the substrate P1 position and for Ser or Pro in the P2 position. Shows activity against amyloid precursor protein, myelin basic protein, gelatin, casein and extracellular matrix proteins such as fibronectin, laminin, vitronectin and collagen. Degrades alpha-synuclein and prevents its polymerization, indicating that it may be involved in the pathogenesis of Parkinson disease and other synucleinopathies. May be involved in regulation of axon outgrowth following spinal cord injury. Tumor cells treated with a neutralizing KLK6 antibody migrate less than control cells, suggesting a role in invasion and metastasis.</text>
</comment>
<comment type="activity regulation">
    <text evidence="8 11">Inhibited by a range of serine protease inhibitors including soybean trypsin inhibitor, benzamidine and serpins. Activated by a range of glycosaminoglycans including chondroitin sulfate, dermatan sulfate, heparan sulfate and heparin.</text>
</comment>
<comment type="biophysicochemical properties">
    <kinetics>
        <KM evidence="6 8">1562 uM for Tosyl-Gly-Pro-Arg-AMC</KM>
        <KM evidence="6 8">777 uM for Tosyl-Gly-Pro-Lys-AMC</KM>
        <KM evidence="6 8">0.41 mM for Phe-Ser-Arg-AMC</KM>
        <KM evidence="6 8">0.455 mM for Gly-Gly-Arg-AMC</KM>
        <KM evidence="6 8">0.335 mM for Asp-Pro-Arg-AMC</KM>
        <KM evidence="6 8">0.758 mM for Gln-Gly-Arg-AMC</KM>
        <KM evidence="6 8">0.625 mM for Pro-Phe-Arg-AMC</KM>
        <KM evidence="6 8">0.271 mM for Val-Pro-Arg-AMC</KM>
        <KM evidence="6 8">1.72 mM for Val-Leu-Lys-AMC</KM>
    </kinetics>
</comment>
<comment type="interaction">
    <interactant intactId="EBI-2432309">
        <id>Q92876</id>
    </interactant>
    <interactant intactId="EBI-12811089">
        <id>Q8NC06-3</id>
        <label>ACBD4</label>
    </interactant>
    <organismsDiffer>false</organismsDiffer>
    <experiments>3</experiments>
</comment>
<comment type="interaction">
    <interactant intactId="EBI-2432309">
        <id>Q92876</id>
    </interactant>
    <interactant intactId="EBI-2907070">
        <id>P11117</id>
        <label>ACP2</label>
    </interactant>
    <organismsDiffer>false</organismsDiffer>
    <experiments>3</experiments>
</comment>
<comment type="interaction">
    <interactant intactId="EBI-2432309">
        <id>Q92876</id>
    </interactant>
    <interactant intactId="EBI-25887341">
        <id>Q53FZ2-2</id>
        <label>ACSM3</label>
    </interactant>
    <organismsDiffer>false</organismsDiffer>
    <experiments>3</experiments>
</comment>
<comment type="interaction">
    <interactant intactId="EBI-2432309">
        <id>Q92876</id>
    </interactant>
    <interactant intactId="EBI-13329511">
        <id>Q96BT7-2</id>
        <label>ALKBH8</label>
    </interactant>
    <organismsDiffer>false</organismsDiffer>
    <experiments>3</experiments>
</comment>
<comment type="interaction">
    <interactant intactId="EBI-2432309">
        <id>Q92876</id>
    </interactant>
    <interactant intactId="EBI-77613">
        <id>P05067</id>
        <label>APP</label>
    </interactant>
    <organismsDiffer>false</organismsDiffer>
    <experiments>4</experiments>
</comment>
<comment type="interaction">
    <interactant intactId="EBI-2432309">
        <id>Q92876</id>
    </interactant>
    <interactant intactId="EBI-2875816">
        <id>Q9NP61</id>
        <label>ARFGAP3</label>
    </interactant>
    <organismsDiffer>false</organismsDiffer>
    <experiments>3</experiments>
</comment>
<comment type="interaction">
    <interactant intactId="EBI-2432309">
        <id>Q92876</id>
    </interactant>
    <interactant intactId="EBI-21899904">
        <id>Q5H9R4-2</id>
        <label>ARMCX4</label>
    </interactant>
    <organismsDiffer>false</organismsDiffer>
    <experiments>3</experiments>
</comment>
<comment type="interaction">
    <interactant intactId="EBI-2432309">
        <id>Q92876</id>
    </interactant>
    <interactant intactId="EBI-12015080">
        <id>Q8WXK3-2</id>
        <label>ASB13</label>
    </interactant>
    <organismsDiffer>false</organismsDiffer>
    <experiments>3</experiments>
</comment>
<comment type="interaction">
    <interactant intactId="EBI-2432309">
        <id>Q92876</id>
    </interactant>
    <interactant intactId="EBI-12092171">
        <id>Q12797-6</id>
        <label>ASPH</label>
    </interactant>
    <organismsDiffer>false</organismsDiffer>
    <experiments>3</experiments>
</comment>
<comment type="interaction">
    <interactant intactId="EBI-2432309">
        <id>Q92876</id>
    </interactant>
    <interactant intactId="EBI-12811889">
        <id>Q9Y6H3</id>
        <label>ATP23</label>
    </interactant>
    <organismsDiffer>false</organismsDiffer>
    <experiments>3</experiments>
</comment>
<comment type="interaction">
    <interactant intactId="EBI-2432309">
        <id>Q92876</id>
    </interactant>
    <interactant intactId="EBI-721179">
        <id>P27449</id>
        <label>ATP6V0C</label>
    </interactant>
    <organismsDiffer>false</organismsDiffer>
    <experiments>3</experiments>
</comment>
<comment type="interaction">
    <interactant intactId="EBI-2432309">
        <id>Q92876</id>
    </interactant>
    <interactant intactId="EBI-747185">
        <id>O95817</id>
        <label>BAG3</label>
    </interactant>
    <organismsDiffer>false</organismsDiffer>
    <experiments>3</experiments>
</comment>
<comment type="interaction">
    <interactant intactId="EBI-2432309">
        <id>Q92876</id>
    </interactant>
    <interactant intactId="EBI-742750">
        <id>Q8TBE0</id>
        <label>BAHD1</label>
    </interactant>
    <organismsDiffer>false</organismsDiffer>
    <experiments>3</experiments>
</comment>
<comment type="interaction">
    <interactant intactId="EBI-2432309">
        <id>Q92876</id>
    </interactant>
    <interactant intactId="EBI-9091996">
        <id>Q9UQB8-3</id>
        <label>BAIAP2</label>
    </interactant>
    <organismsDiffer>false</organismsDiffer>
    <experiments>3</experiments>
</comment>
<comment type="interaction">
    <interactant intactId="EBI-2432309">
        <id>Q92876</id>
    </interactant>
    <interactant intactId="EBI-9092016">
        <id>Q9UQB8-6</id>
        <label>BAIAP2</label>
    </interactant>
    <organismsDiffer>false</organismsDiffer>
    <experiments>3</experiments>
</comment>
<comment type="interaction">
    <interactant intactId="EBI-2432309">
        <id>Q92876</id>
    </interactant>
    <interactant intactId="EBI-77683">
        <id>P51572</id>
        <label>BCAP31</label>
    </interactant>
    <organismsDiffer>false</organismsDiffer>
    <experiments>3</experiments>
</comment>
<comment type="interaction">
    <interactant intactId="EBI-2432309">
        <id>Q92876</id>
    </interactant>
    <interactant intactId="EBI-25846497">
        <id>O15155-2</id>
        <label>BET1</label>
    </interactant>
    <organismsDiffer>false</organismsDiffer>
    <experiments>3</experiments>
</comment>
<comment type="interaction">
    <interactant intactId="EBI-2432309">
        <id>Q92876</id>
    </interactant>
    <interactant intactId="EBI-745073">
        <id>Q9BXY8</id>
        <label>BEX2</label>
    </interactant>
    <organismsDiffer>false</organismsDiffer>
    <experiments>3</experiments>
</comment>
<comment type="interaction">
    <interactant intactId="EBI-2432309">
        <id>Q92876</id>
    </interactant>
    <interactant intactId="EBI-21557060">
        <id>Q7L1Q6-2</id>
        <label>BZW1</label>
    </interactant>
    <organismsDiffer>false</organismsDiffer>
    <experiments>3</experiments>
</comment>
<comment type="interaction">
    <interactant intactId="EBI-2432309">
        <id>Q92876</id>
    </interactant>
    <interactant intactId="EBI-12108466">
        <id>Q9H0W9-3</id>
        <label>C11orf54</label>
    </interactant>
    <organismsDiffer>false</organismsDiffer>
    <experiments>3</experiments>
</comment>
<comment type="interaction">
    <interactant intactId="EBI-2432309">
        <id>Q92876</id>
    </interactant>
    <interactant intactId="EBI-11530605">
        <id>Q9H257-2</id>
        <label>CARD9</label>
    </interactant>
    <organismsDiffer>false</organismsDiffer>
    <experiments>3</experiments>
</comment>
<comment type="interaction">
    <interactant intactId="EBI-2432309">
        <id>Q92876</id>
    </interactant>
    <interactant intactId="EBI-10260328">
        <id>Q86XM0</id>
        <label>CATSPERD</label>
    </interactant>
    <organismsDiffer>false</organismsDiffer>
    <experiments>3</experiments>
</comment>
<comment type="interaction">
    <interactant intactId="EBI-2432309">
        <id>Q92876</id>
    </interactant>
    <interactant intactId="EBI-2837263">
        <id>O75309</id>
        <label>CDH16</label>
    </interactant>
    <organismsDiffer>false</organismsDiffer>
    <experiments>3</experiments>
</comment>
<comment type="interaction">
    <interactant intactId="EBI-2432309">
        <id>Q92876</id>
    </interactant>
    <interactant intactId="EBI-11039720">
        <id>P49336-2</id>
        <label>CDK8</label>
    </interactant>
    <organismsDiffer>false</organismsDiffer>
    <experiments>3</experiments>
</comment>
<comment type="interaction">
    <interactant intactId="EBI-2432309">
        <id>Q92876</id>
    </interactant>
    <interactant intactId="EBI-351218">
        <id>Q9Y281</id>
        <label>CFL2</label>
    </interactant>
    <organismsDiffer>false</organismsDiffer>
    <experiments>3</experiments>
</comment>
<comment type="interaction">
    <interactant intactId="EBI-2432309">
        <id>Q92876</id>
    </interactant>
    <interactant intactId="EBI-7127986">
        <id>Q8NE62</id>
        <label>CHDH</label>
    </interactant>
    <organismsDiffer>false</organismsDiffer>
    <experiments>3</experiments>
</comment>
<comment type="interaction">
    <interactant intactId="EBI-2432309">
        <id>Q92876</id>
    </interactant>
    <interactant intactId="EBI-12820543">
        <id>O75508</id>
        <label>CLDN11</label>
    </interactant>
    <organismsDiffer>false</organismsDiffer>
    <experiments>3</experiments>
</comment>
<comment type="interaction">
    <interactant intactId="EBI-2432309">
        <id>Q92876</id>
    </interactant>
    <interactant intactId="EBI-2835965">
        <id>Q9BT09</id>
        <label>CNPY3</label>
    </interactant>
    <organismsDiffer>false</organismsDiffer>
    <experiments>3</experiments>
</comment>
<comment type="interaction">
    <interactant intactId="EBI-2432309">
        <id>Q92876</id>
    </interactant>
    <interactant intactId="EBI-2528238">
        <id>P20849</id>
        <label>COL9A1</label>
    </interactant>
    <organismsDiffer>false</organismsDiffer>
    <experiments>3</experiments>
</comment>
<comment type="interaction">
    <interactant intactId="EBI-2432309">
        <id>Q92876</id>
    </interactant>
    <interactant intactId="EBI-10260134">
        <id>Q86WV2</id>
        <label>COX4I1</label>
    </interactant>
    <organismsDiffer>false</organismsDiffer>
    <experiments>3</experiments>
</comment>
<comment type="interaction">
    <interactant intactId="EBI-2432309">
        <id>Q92876</id>
    </interactant>
    <interactant intactId="EBI-347804">
        <id>P68400</id>
        <label>CSNK2A1</label>
    </interactant>
    <organismsDiffer>false</organismsDiffer>
    <experiments>3</experiments>
</comment>
<comment type="interaction">
    <interactant intactId="EBI-2432309">
        <id>Q92876</id>
    </interactant>
    <interactant intactId="EBI-6189940">
        <id>P09668</id>
        <label>CTSH</label>
    </interactant>
    <organismsDiffer>false</organismsDiffer>
    <experiments>3</experiments>
</comment>
<comment type="interaction">
    <interactant intactId="EBI-2432309">
        <id>Q92876</id>
    </interactant>
    <interactant intactId="EBI-8589586">
        <id>P09172</id>
        <label>DBH</label>
    </interactant>
    <organismsDiffer>false</organismsDiffer>
    <experiments>3</experiments>
</comment>
<comment type="interaction">
    <interactant intactId="EBI-2432309">
        <id>Q92876</id>
    </interactant>
    <interactant intactId="EBI-359808">
        <id>P61962</id>
        <label>DCAF7</label>
    </interactant>
    <organismsDiffer>false</organismsDiffer>
    <experiments>3</experiments>
</comment>
<comment type="interaction">
    <interactant intactId="EBI-2432309">
        <id>Q92876</id>
    </interactant>
    <interactant intactId="EBI-3924013">
        <id>Q9BTE7</id>
        <label>DCUN1D5</label>
    </interactant>
    <organismsDiffer>false</organismsDiffer>
    <experiments>3</experiments>
</comment>
<comment type="interaction">
    <interactant intactId="EBI-2432309">
        <id>Q92876</id>
    </interactant>
    <interactant intactId="EBI-25888224">
        <id>Q6ZPD9-2</id>
        <label>DPY19L3</label>
    </interactant>
    <organismsDiffer>false</organismsDiffer>
    <experiments>3</experiments>
</comment>
<comment type="interaction">
    <interactant intactId="EBI-2432309">
        <id>Q92876</id>
    </interactant>
    <interactant intactId="EBI-349105">
        <id>P63167</id>
        <label>DYNLL1</label>
    </interactant>
    <organismsDiffer>false</organismsDiffer>
    <experiments>3</experiments>
</comment>
<comment type="interaction">
    <interactant intactId="EBI-2432309">
        <id>Q92876</id>
    </interactant>
    <interactant intactId="EBI-4401110">
        <id>Q13144</id>
        <label>EIF2B5</label>
    </interactant>
    <organismsDiffer>false</organismsDiffer>
    <experiments>3</experiments>
</comment>
<comment type="interaction">
    <interactant intactId="EBI-2432309">
        <id>Q92876</id>
    </interactant>
    <interactant intactId="EBI-970310">
        <id>P23588</id>
        <label>EIF4B</label>
    </interactant>
    <organismsDiffer>false</organismsDiffer>
    <experiments>3</experiments>
</comment>
<comment type="interaction">
    <interactant intactId="EBI-2432309">
        <id>Q92876</id>
    </interactant>
    <interactant intactId="EBI-1182496">
        <id>P16452</id>
        <label>EPB42</label>
    </interactant>
    <organismsDiffer>false</organismsDiffer>
    <experiments>3</experiments>
</comment>
<comment type="interaction">
    <interactant intactId="EBI-2432309">
        <id>Q92876</id>
    </interactant>
    <interactant intactId="EBI-20839496">
        <id>Q5RHP9-3</id>
        <label>ERICH3</label>
    </interactant>
    <organismsDiffer>false</organismsDiffer>
    <experiments>3</experiments>
</comment>
<comment type="interaction">
    <interactant intactId="EBI-2432309">
        <id>Q92876</id>
    </interactant>
    <interactant intactId="EBI-10213520">
        <id>Q6NXG1</id>
        <label>ESRP1</label>
    </interactant>
    <organismsDiffer>false</organismsDiffer>
    <experiments>3</experiments>
</comment>
<comment type="interaction">
    <interactant intactId="EBI-2432309">
        <id>Q92876</id>
    </interactant>
    <interactant intactId="EBI-21567429">
        <id>Q6NXG1-3</id>
        <label>ESRP1</label>
    </interactant>
    <organismsDiffer>false</organismsDiffer>
    <experiments>3</experiments>
</comment>
<comment type="interaction">
    <interactant intactId="EBI-2432309">
        <id>Q92876</id>
    </interactant>
    <interactant intactId="EBI-11337888">
        <id>Q7L5A8</id>
        <label>FA2H</label>
    </interactant>
    <organismsDiffer>false</organismsDiffer>
    <experiments>3</experiments>
</comment>
<comment type="interaction">
    <interactant intactId="EBI-2432309">
        <id>Q92876</id>
    </interactant>
    <interactant intactId="EBI-12013806">
        <id>Q6NZ36-4</id>
        <label>FAAP20</label>
    </interactant>
    <organismsDiffer>false</organismsDiffer>
    <experiments>3</experiments>
</comment>
<comment type="interaction">
    <interactant intactId="EBI-2432309">
        <id>Q92876</id>
    </interactant>
    <interactant intactId="EBI-1754067">
        <id>Q14296</id>
        <label>FASTK</label>
    </interactant>
    <organismsDiffer>false</organismsDiffer>
    <experiments>3</experiments>
</comment>
<comment type="interaction">
    <interactant intactId="EBI-2432309">
        <id>Q92876</id>
    </interactant>
    <interactant intactId="EBI-358093">
        <id>P62861</id>
        <label>FAU</label>
    </interactant>
    <organismsDiffer>false</organismsDiffer>
    <experiments>3</experiments>
</comment>
<comment type="interaction">
    <interactant intactId="EBI-2432309">
        <id>Q92876</id>
    </interactant>
    <interactant intactId="EBI-724784">
        <id>P31994</id>
        <label>FCGR2B</label>
    </interactant>
    <organismsDiffer>false</organismsDiffer>
    <experiments>3</experiments>
</comment>
<comment type="interaction">
    <interactant intactId="EBI-2432309">
        <id>Q92876</id>
    </interactant>
    <interactant intactId="EBI-751757">
        <id>Q7L622</id>
        <label>G2E3</label>
    </interactant>
    <organismsDiffer>false</organismsDiffer>
    <experiments>3</experiments>
</comment>
<comment type="interaction">
    <interactant intactId="EBI-2432309">
        <id>Q92876</id>
    </interactant>
    <interactant intactId="EBI-448167">
        <id>P24522</id>
        <label>GADD45A</label>
    </interactant>
    <organismsDiffer>false</organismsDiffer>
    <experiments>3</experiments>
</comment>
<comment type="interaction">
    <interactant intactId="EBI-2432309">
        <id>Q92876</id>
    </interactant>
    <interactant intactId="EBI-9090198">
        <id>P15976-2</id>
        <label>GATA1</label>
    </interactant>
    <organismsDiffer>false</organismsDiffer>
    <experiments>3</experiments>
</comment>
<comment type="interaction">
    <interactant intactId="EBI-2432309">
        <id>Q92876</id>
    </interactant>
    <interactant intactId="EBI-8799578">
        <id>Q9NXC2</id>
        <label>GFOD1</label>
    </interactant>
    <organismsDiffer>false</organismsDiffer>
    <experiments>3</experiments>
</comment>
<comment type="interaction">
    <interactant intactId="EBI-2432309">
        <id>Q92876</id>
    </interactant>
    <interactant intactId="EBI-25844370">
        <id>B2RAF7</id>
        <label>hCG_1818547</label>
    </interactant>
    <organismsDiffer>false</organismsDiffer>
    <experiments>3</experiments>
</comment>
<comment type="interaction">
    <interactant intactId="EBI-2432309">
        <id>Q92876</id>
    </interactant>
    <interactant intactId="EBI-2965780">
        <id>P52790</id>
        <label>HK3</label>
    </interactant>
    <organismsDiffer>false</organismsDiffer>
    <experiments>3</experiments>
</comment>
<comment type="interaction">
    <interactant intactId="EBI-2432309">
        <id>Q92876</id>
    </interactant>
    <interactant intactId="EBI-713401">
        <id>Q9P0W2</id>
        <label>HMG20B</label>
    </interactant>
    <organismsDiffer>false</organismsDiffer>
    <experiments>3</experiments>
</comment>
<comment type="interaction">
    <interactant intactId="EBI-2432309">
        <id>Q92876</id>
    </interactant>
    <interactant intactId="EBI-17494170">
        <id>Q4VB01</id>
        <label>HOXB1</label>
    </interactant>
    <organismsDiffer>false</organismsDiffer>
    <experiments>3</experiments>
</comment>
<comment type="interaction">
    <interactant intactId="EBI-2432309">
        <id>Q92876</id>
    </interactant>
    <interactant intactId="EBI-25887463">
        <id>Q7LGA3-3</id>
        <label>HS2ST1</label>
    </interactant>
    <organismsDiffer>false</organismsDiffer>
    <experiments>3</experiments>
</comment>
<comment type="interaction">
    <interactant intactId="EBI-2432309">
        <id>Q92876</id>
    </interactant>
    <interactant intactId="EBI-25888137">
        <id>Q96D96-2</id>
        <label>HVCN1</label>
    </interactant>
    <organismsDiffer>false</organismsDiffer>
    <experiments>3</experiments>
</comment>
<comment type="interaction">
    <interactant intactId="EBI-2432309">
        <id>Q92876</id>
    </interactant>
    <interactant intactId="EBI-8638439">
        <id>Q8IYA8</id>
        <label>IHO1</label>
    </interactant>
    <organismsDiffer>false</organismsDiffer>
    <experiments>3</experiments>
</comment>
<comment type="interaction">
    <interactant intactId="EBI-2432309">
        <id>Q92876</id>
    </interactant>
    <interactant intactId="EBI-17178971">
        <id>Q14005-2</id>
        <label>IL16</label>
    </interactant>
    <organismsDiffer>false</organismsDiffer>
    <experiments>3</experiments>
</comment>
<comment type="interaction">
    <interactant intactId="EBI-2432309">
        <id>Q92876</id>
    </interactant>
    <interactant intactId="EBI-6509505">
        <id>Q0VD86</id>
        <label>INCA1</label>
    </interactant>
    <organismsDiffer>false</organismsDiffer>
    <experiments>3</experiments>
</comment>
<comment type="interaction">
    <interactant intactId="EBI-2432309">
        <id>Q92876</id>
    </interactant>
    <interactant intactId="EBI-749162">
        <id>Q9BT40</id>
        <label>INPP5K</label>
    </interactant>
    <organismsDiffer>false</organismsDiffer>
    <experiments>3</experiments>
</comment>
<comment type="interaction">
    <interactant intactId="EBI-2432309">
        <id>Q92876</id>
    </interactant>
    <interactant intactId="EBI-11944909">
        <id>Q9Y283-3</id>
        <label>INVS</label>
    </interactant>
    <organismsDiffer>false</organismsDiffer>
    <experiments>3</experiments>
</comment>
<comment type="interaction">
    <interactant intactId="EBI-2432309">
        <id>Q92876</id>
    </interactant>
    <interactant intactId="EBI-8472267">
        <id>P57682</id>
        <label>KLF3</label>
    </interactant>
    <organismsDiffer>false</organismsDiffer>
    <experiments>3</experiments>
</comment>
<comment type="interaction">
    <interactant intactId="EBI-2432309">
        <id>Q92876</id>
    </interactant>
    <interactant intactId="EBI-714379">
        <id>Q9Y2M5</id>
        <label>KLHL20</label>
    </interactant>
    <organismsDiffer>false</organismsDiffer>
    <experiments>3</experiments>
</comment>
<comment type="interaction">
    <interactant intactId="EBI-2432309">
        <id>Q92876</id>
    </interactant>
    <interactant intactId="EBI-3915857">
        <id>O60259</id>
        <label>KLK8</label>
    </interactant>
    <organismsDiffer>false</organismsDiffer>
    <experiments>3</experiments>
</comment>
<comment type="interaction">
    <interactant intactId="EBI-2432309">
        <id>Q92876</id>
    </interactant>
    <interactant intactId="EBI-742756">
        <id>P08727</id>
        <label>KRT19</label>
    </interactant>
    <organismsDiffer>false</organismsDiffer>
    <experiments>3</experiments>
</comment>
<comment type="interaction">
    <interactant intactId="EBI-2432309">
        <id>Q92876</id>
    </interactant>
    <interactant intactId="EBI-739648">
        <id>Q14533</id>
        <label>KRT81</label>
    </interactant>
    <organismsDiffer>false</organismsDiffer>
    <experiments>3</experiments>
</comment>
<comment type="interaction">
    <interactant intactId="EBI-2432309">
        <id>Q92876</id>
    </interactant>
    <interactant intactId="EBI-1048945">
        <id>Q3LI72</id>
        <label>KRTAP19-5</label>
    </interactant>
    <organismsDiffer>false</organismsDiffer>
    <experiments>3</experiments>
</comment>
<comment type="interaction">
    <interactant intactId="EBI-2432309">
        <id>Q92876</id>
    </interactant>
    <interactant intactId="EBI-10241353">
        <id>Q3SYF9</id>
        <label>KRTAP19-7</label>
    </interactant>
    <organismsDiffer>false</organismsDiffer>
    <experiments>3</experiments>
</comment>
<comment type="interaction">
    <interactant intactId="EBI-2432309">
        <id>Q92876</id>
    </interactant>
    <interactant intactId="EBI-10261141">
        <id>Q8IUC2</id>
        <label>KRTAP8-1</label>
    </interactant>
    <organismsDiffer>false</organismsDiffer>
    <experiments>3</experiments>
</comment>
<comment type="interaction">
    <interactant intactId="EBI-2432309">
        <id>Q92876</id>
    </interactant>
    <interactant intactId="EBI-1052558">
        <id>Q92615</id>
        <label>LARP4B</label>
    </interactant>
    <organismsDiffer>false</organismsDiffer>
    <experiments>3</experiments>
</comment>
<comment type="interaction">
    <interactant intactId="EBI-2432309">
        <id>Q92876</id>
    </interactant>
    <interactant intactId="EBI-9088686">
        <id>Q14847-2</id>
        <label>LASP1</label>
    </interactant>
    <organismsDiffer>false</organismsDiffer>
    <experiments>3</experiments>
</comment>
<comment type="interaction">
    <interactant intactId="EBI-2432309">
        <id>Q92876</id>
    </interactant>
    <interactant intactId="EBI-9088829">
        <id>Q6DKI2</id>
        <label>LGALS9C</label>
    </interactant>
    <organismsDiffer>false</organismsDiffer>
    <experiments>3</experiments>
</comment>
<comment type="interaction">
    <interactant intactId="EBI-2432309">
        <id>Q92876</id>
    </interactant>
    <interactant intactId="EBI-25846312">
        <id>Q8TE12-2</id>
        <label>LMX1A</label>
    </interactant>
    <organismsDiffer>false</organismsDiffer>
    <experiments>3</experiments>
</comment>
<comment type="interaction">
    <interactant intactId="EBI-2432309">
        <id>Q92876</id>
    </interactant>
    <interactant intactId="EBI-25846778">
        <id>O95332</id>
        <label>LOC57228</label>
    </interactant>
    <organismsDiffer>false</organismsDiffer>
    <experiments>3</experiments>
</comment>
<comment type="interaction">
    <interactant intactId="EBI-2432309">
        <id>Q92876</id>
    </interactant>
    <interactant intactId="EBI-749562">
        <id>Q96JB6</id>
        <label>LOXL4</label>
    </interactant>
    <organismsDiffer>false</organismsDiffer>
    <experiments>3</experiments>
</comment>
<comment type="interaction">
    <interactant intactId="EBI-2432309">
        <id>Q92876</id>
    </interactant>
    <interactant intactId="EBI-476263">
        <id>Q99683</id>
        <label>MAP3K5</label>
    </interactant>
    <organismsDiffer>false</organismsDiffer>
    <experiments>3</experiments>
</comment>
<comment type="interaction">
    <interactant intactId="EBI-2432309">
        <id>Q92876</id>
    </interactant>
    <interactant intactId="EBI-298304">
        <id>Q15759</id>
        <label>MAPK11</label>
    </interactant>
    <organismsDiffer>false</organismsDiffer>
    <experiments>3</experiments>
</comment>
<comment type="interaction">
    <interactant intactId="EBI-2432309">
        <id>Q92876</id>
    </interactant>
    <interactant intactId="EBI-751664">
        <id>P42679</id>
        <label>MATK</label>
    </interactant>
    <organismsDiffer>false</organismsDiffer>
    <experiments>3</experiments>
</comment>
<comment type="interaction">
    <interactant intactId="EBI-2432309">
        <id>Q92876</id>
    </interactant>
    <interactant intactId="EBI-1053295">
        <id>Q8N6R0</id>
        <label>METTL13</label>
    </interactant>
    <organismsDiffer>false</organismsDiffer>
    <experiments>3</experiments>
</comment>
<comment type="interaction">
    <interactant intactId="EBI-2432309">
        <id>Q92876</id>
    </interactant>
    <interactant intactId="EBI-11337904">
        <id>Q14728</id>
        <label>MFSD10</label>
    </interactant>
    <organismsDiffer>false</organismsDiffer>
    <experiments>3</experiments>
</comment>
<comment type="interaction">
    <interactant intactId="EBI-2432309">
        <id>Q92876</id>
    </interactant>
    <interactant intactId="EBI-25835557">
        <id>A0A0A0MR05</id>
        <label>MLST8</label>
    </interactant>
    <organismsDiffer>false</organismsDiffer>
    <experiments>3</experiments>
</comment>
<comment type="interaction">
    <interactant intactId="EBI-2432309">
        <id>Q92876</id>
    </interactant>
    <interactant intactId="EBI-9106509">
        <id>Q9BRA0</id>
        <label>NAA38</label>
    </interactant>
    <organismsDiffer>false</organismsDiffer>
    <experiments>3</experiments>
</comment>
<comment type="interaction">
    <interactant intactId="EBI-2432309">
        <id>Q92876</id>
    </interactant>
    <interactant intactId="EBI-10279647">
        <id>Q92886</id>
        <label>NEUROG1</label>
    </interactant>
    <organismsDiffer>false</organismsDiffer>
    <experiments>3</experiments>
</comment>
<comment type="interaction">
    <interactant intactId="EBI-2432309">
        <id>Q92876</id>
    </interactant>
    <interactant intactId="EBI-10210351">
        <id>P48645</id>
        <label>NMU</label>
    </interactant>
    <organismsDiffer>false</organismsDiffer>
    <experiments>3</experiments>
</comment>
<comment type="interaction">
    <interactant intactId="EBI-2432309">
        <id>Q92876</id>
    </interactant>
    <interactant intactId="EBI-1051262">
        <id>Q9Y239</id>
        <label>NOD1</label>
    </interactant>
    <organismsDiffer>false</organismsDiffer>
    <experiments>3</experiments>
</comment>
<comment type="interaction">
    <interactant intactId="EBI-2432309">
        <id>Q92876</id>
    </interactant>
    <interactant intactId="EBI-78579">
        <id>P06748</id>
        <label>NPM1</label>
    </interactant>
    <organismsDiffer>false</organismsDiffer>
    <experiments>3</experiments>
</comment>
<comment type="interaction">
    <interactant intactId="EBI-2432309">
        <id>Q92876</id>
    </interactant>
    <interactant intactId="EBI-9091052">
        <id>Q6P4D5-2</id>
        <label>PABIR3</label>
    </interactant>
    <organismsDiffer>false</organismsDiffer>
    <experiments>3</experiments>
</comment>
<comment type="interaction">
    <interactant intactId="EBI-2432309">
        <id>Q92876</id>
    </interactant>
    <interactant intactId="EBI-10972020">
        <id>Q8WW12</id>
        <label>PCNP</label>
    </interactant>
    <organismsDiffer>false</organismsDiffer>
    <experiments>3</experiments>
</comment>
<comment type="interaction">
    <interactant intactId="EBI-2432309">
        <id>Q92876</id>
    </interactant>
    <interactant intactId="EBI-8059854">
        <id>Q16549</id>
        <label>PCSK7</label>
    </interactant>
    <organismsDiffer>false</organismsDiffer>
    <experiments>3</experiments>
</comment>
<comment type="interaction">
    <interactant intactId="EBI-2432309">
        <id>Q92876</id>
    </interactant>
    <interactant intactId="EBI-5772890">
        <id>Q13371</id>
        <label>PDCL</label>
    </interactant>
    <organismsDiffer>false</organismsDiffer>
    <experiments>3</experiments>
</comment>
<comment type="interaction">
    <interactant intactId="EBI-2432309">
        <id>Q92876</id>
    </interactant>
    <interactant intactId="EBI-25887738">
        <id>Q9NZ53-2</id>
        <label>PODXL2</label>
    </interactant>
    <organismsDiffer>false</organismsDiffer>
    <experiments>3</experiments>
</comment>
<comment type="interaction">
    <interactant intactId="EBI-2432309">
        <id>Q92876</id>
    </interactant>
    <interactant intactId="EBI-359458">
        <id>Q9GZS1</id>
        <label>POLR1E</label>
    </interactant>
    <organismsDiffer>false</organismsDiffer>
    <experiments>3</experiments>
</comment>
<comment type="interaction">
    <interactant intactId="EBI-2432309">
        <id>Q92876</id>
    </interactant>
    <interactant intactId="EBI-395189">
        <id>P19388</id>
        <label>POLR2E</label>
    </interactant>
    <organismsDiffer>false</organismsDiffer>
    <experiments>3</experiments>
</comment>
<comment type="interaction">
    <interactant intactId="EBI-2432309">
        <id>Q92876</id>
    </interactant>
    <interactant intactId="EBI-25835994">
        <id>Q6ZMI0-5</id>
        <label>PPP1R21</label>
    </interactant>
    <organismsDiffer>false</organismsDiffer>
    <experiments>3</experiments>
</comment>
<comment type="interaction">
    <interactant intactId="EBI-2432309">
        <id>Q92876</id>
    </interactant>
    <interactant intactId="EBI-2860740">
        <id>Q96QH2</id>
        <label>PRAM1</label>
    </interactant>
    <organismsDiffer>false</organismsDiffer>
    <experiments>3</experiments>
</comment>
<comment type="interaction">
    <interactant intactId="EBI-2432309">
        <id>Q92876</id>
    </interactant>
    <interactant intactId="EBI-2803203">
        <id>Q86UA1</id>
        <label>PRPF39</label>
    </interactant>
    <organismsDiffer>false</organismsDiffer>
    <experiments>3</experiments>
</comment>
<comment type="interaction">
    <interactant intactId="EBI-2432309">
        <id>Q92876</id>
    </interactant>
    <interactant intactId="EBI-355546">
        <id>P61289</id>
        <label>PSME3</label>
    </interactant>
    <organismsDiffer>false</organismsDiffer>
    <experiments>3</experiments>
</comment>
<comment type="interaction">
    <interactant intactId="EBI-2432309">
        <id>Q92876</id>
    </interactant>
    <interactant intactId="EBI-473725">
        <id>P21246</id>
        <label>PTN</label>
    </interactant>
    <organismsDiffer>false</organismsDiffer>
    <experiments>3</experiments>
</comment>
<comment type="interaction">
    <interactant intactId="EBI-2432309">
        <id>Q92876</id>
    </interactant>
    <interactant intactId="EBI-3906138">
        <id>P53801</id>
        <label>PTTG1IP</label>
    </interactant>
    <organismsDiffer>false</organismsDiffer>
    <experiments>3</experiments>
</comment>
<comment type="interaction">
    <interactant intactId="EBI-2432309">
        <id>Q92876</id>
    </interactant>
    <interactant intactId="EBI-12123390">
        <id>Q9NWB1-5</id>
        <label>RBFOX1</label>
    </interactant>
    <organismsDiffer>false</organismsDiffer>
    <experiments>3</experiments>
</comment>
<comment type="interaction">
    <interactant intactId="EBI-2432309">
        <id>Q92876</id>
    </interactant>
    <interactant intactId="EBI-2856454">
        <id>Q9BWF3</id>
        <label>RBM4</label>
    </interactant>
    <organismsDiffer>false</organismsDiffer>
    <experiments>3</experiments>
</comment>
<comment type="interaction">
    <interactant intactId="EBI-2432309">
        <id>Q92876</id>
    </interactant>
    <interactant intactId="EBI-714003">
        <id>P52756</id>
        <label>RBM5</label>
    </interactant>
    <organismsDiffer>false</organismsDiffer>
    <experiments>3</experiments>
</comment>
<comment type="interaction">
    <interactant intactId="EBI-2432309">
        <id>Q92876</id>
    </interactant>
    <interactant intactId="EBI-25834767">
        <id>P47804-3</id>
        <label>RGR</label>
    </interactant>
    <organismsDiffer>false</organismsDiffer>
    <experiments>3</experiments>
</comment>
<comment type="interaction">
    <interactant intactId="EBI-2432309">
        <id>Q92876</id>
    </interactant>
    <interactant intactId="EBI-751555">
        <id>Q9H0X6</id>
        <label>RNF208</label>
    </interactant>
    <organismsDiffer>false</organismsDiffer>
    <experiments>3</experiments>
</comment>
<comment type="interaction">
    <interactant intactId="EBI-2432309">
        <id>Q92876</id>
    </interactant>
    <interactant intactId="EBI-2340642">
        <id>Q969K3</id>
        <label>RNF34</label>
    </interactant>
    <organismsDiffer>false</organismsDiffer>
    <experiments>3</experiments>
</comment>
<comment type="interaction">
    <interactant intactId="EBI-2432309">
        <id>Q92876</id>
    </interactant>
    <interactant intactId="EBI-25837959">
        <id>Q9BY12-3</id>
        <label>SCAPER</label>
    </interactant>
    <organismsDiffer>false</organismsDiffer>
    <experiments>3</experiments>
</comment>
<comment type="interaction">
    <interactant intactId="EBI-2432309">
        <id>Q92876</id>
    </interactant>
    <interactant intactId="EBI-10696955">
        <id>Q86SQ7-2</id>
        <label>SDCCAG8</label>
    </interactant>
    <organismsDiffer>false</organismsDiffer>
    <experiments>3</experiments>
</comment>
<comment type="interaction">
    <interactant intactId="EBI-2432309">
        <id>Q92876</id>
    </interactant>
    <interactant intactId="EBI-9089805">
        <id>Q9NTN9-3</id>
        <label>SEMA4G</label>
    </interactant>
    <organismsDiffer>false</organismsDiffer>
    <experiments>3</experiments>
</comment>
<comment type="interaction">
    <interactant intactId="EBI-2432309">
        <id>Q92876</id>
    </interactant>
    <interactant intactId="EBI-11522811">
        <id>Q8IUQ4-2</id>
        <label>SIAH1</label>
    </interactant>
    <organismsDiffer>false</organismsDiffer>
    <experiments>3</experiments>
</comment>
<comment type="interaction">
    <interactant intactId="EBI-2432309">
        <id>Q92876</id>
    </interactant>
    <interactant intactId="EBI-12908340">
        <id>Q9H2B4-2</id>
        <label>SLC26A1</label>
    </interactant>
    <organismsDiffer>false</organismsDiffer>
    <experiments>3</experiments>
</comment>
<comment type="interaction">
    <interactant intactId="EBI-2432309">
        <id>Q92876</id>
    </interactant>
    <interactant intactId="EBI-6391136">
        <id>Q99717</id>
        <label>SMAD5</label>
    </interactant>
    <organismsDiffer>false</organismsDiffer>
    <experiments>3</experiments>
</comment>
<comment type="interaction">
    <interactant intactId="EBI-2432309">
        <id>Q92876</id>
    </interactant>
    <interactant intactId="EBI-985879">
        <id>P37840</id>
        <label>SNCA</label>
    </interactant>
    <organismsDiffer>false</organismsDiffer>
    <experiments>3</experiments>
</comment>
<comment type="interaction">
    <interactant intactId="EBI-2432309">
        <id>Q92876</id>
    </interactant>
    <interactant intactId="EBI-750105">
        <id>Q5T0L3</id>
        <label>SPATA46</label>
    </interactant>
    <organismsDiffer>false</organismsDiffer>
    <experiments>3</experiments>
</comment>
<comment type="interaction">
    <interactant intactId="EBI-2432309">
        <id>Q92876</id>
    </interactant>
    <interactant intactId="EBI-3923692">
        <id>Q496A3</id>
        <label>SPATS1</label>
    </interactant>
    <organismsDiffer>false</organismsDiffer>
    <experiments>3</experiments>
</comment>
<comment type="interaction">
    <interactant intactId="EBI-2432309">
        <id>Q92876</id>
    </interactant>
    <interactant intactId="EBI-10298801">
        <id>Q9BUD6</id>
        <label>SPON2</label>
    </interactant>
    <organismsDiffer>false</organismsDiffer>
    <experiments>3</experiments>
</comment>
<comment type="interaction">
    <interactant intactId="EBI-2432309">
        <id>Q92876</id>
    </interactant>
    <interactant intactId="EBI-354861">
        <id>Q9C004</id>
        <label>SPRY4</label>
    </interactant>
    <organismsDiffer>false</organismsDiffer>
    <experiments>3</experiments>
</comment>
<comment type="interaction">
    <interactant intactId="EBI-2432309">
        <id>Q92876</id>
    </interactant>
    <interactant intactId="EBI-2652799">
        <id>Q99469</id>
        <label>STAC</label>
    </interactant>
    <organismsDiffer>false</organismsDiffer>
    <experiments>3</experiments>
</comment>
<comment type="interaction">
    <interactant intactId="EBI-2432309">
        <id>Q92876</id>
    </interactant>
    <interactant intactId="EBI-714135">
        <id>O75558</id>
        <label>STX11</label>
    </interactant>
    <organismsDiffer>false</organismsDiffer>
    <experiments>3</experiments>
</comment>
<comment type="interaction">
    <interactant intactId="EBI-2432309">
        <id>Q92876</id>
    </interactant>
    <interactant intactId="EBI-740595">
        <id>Q9UMX1</id>
        <label>SUFU</label>
    </interactant>
    <organismsDiffer>false</organismsDiffer>
    <experiments>3</experiments>
</comment>
<comment type="interaction">
    <interactant intactId="EBI-2432309">
        <id>Q92876</id>
    </interactant>
    <interactant intactId="EBI-349968">
        <id>O43463</id>
        <label>SUV39H1</label>
    </interactant>
    <organismsDiffer>false</organismsDiffer>
    <experiments>3</experiments>
</comment>
<comment type="interaction">
    <interactant intactId="EBI-2432309">
        <id>Q92876</id>
    </interactant>
    <interactant intactId="EBI-11123832">
        <id>O60506-4</id>
        <label>SYNCRIP</label>
    </interactant>
    <organismsDiffer>false</organismsDiffer>
    <experiments>3</experiments>
</comment>
<comment type="interaction">
    <interactant intactId="EBI-2432309">
        <id>Q92876</id>
    </interactant>
    <interactant intactId="EBI-3923210">
        <id>Q8TDR4</id>
        <label>TCP10L</label>
    </interactant>
    <organismsDiffer>false</organismsDiffer>
    <experiments>3</experiments>
</comment>
<comment type="interaction">
    <interactant intactId="EBI-2432309">
        <id>Q92876</id>
    </interactant>
    <interactant intactId="EBI-752030">
        <id>Q96A09</id>
        <label>TENT5B</label>
    </interactant>
    <organismsDiffer>false</organismsDiffer>
    <experiments>3</experiments>
</comment>
<comment type="interaction">
    <interactant intactId="EBI-2432309">
        <id>Q92876</id>
    </interactant>
    <interactant intactId="EBI-2514218">
        <id>Q01664</id>
        <label>TFAP4</label>
    </interactant>
    <organismsDiffer>false</organismsDiffer>
    <experiments>3</experiments>
</comment>
<comment type="interaction">
    <interactant intactId="EBI-2432309">
        <id>Q92876</id>
    </interactant>
    <interactant intactId="EBI-2824523">
        <id>Q6YHU6</id>
        <label>THADA</label>
    </interactant>
    <organismsDiffer>false</organismsDiffer>
    <experiments>3</experiments>
</comment>
<comment type="interaction">
    <interactant intactId="EBI-2432309">
        <id>Q92876</id>
    </interactant>
    <interactant intactId="EBI-3921684">
        <id>Q9H808</id>
        <label>TLE6</label>
    </interactant>
    <organismsDiffer>false</organismsDiffer>
    <experiments>3</experiments>
</comment>
<comment type="interaction">
    <interactant intactId="EBI-2432309">
        <id>Q92876</id>
    </interactant>
    <interactant intactId="EBI-25839648">
        <id>Q8IU80-2</id>
        <label>TMPRSS6</label>
    </interactant>
    <organismsDiffer>false</organismsDiffer>
    <experiments>3</experiments>
</comment>
<comment type="interaction">
    <interactant intactId="EBI-2432309">
        <id>Q92876</id>
    </interactant>
    <interactant intactId="EBI-9089156">
        <id>Q8IUR5-4</id>
        <label>TMTC1</label>
    </interactant>
    <organismsDiffer>false</organismsDiffer>
    <experiments>3</experiments>
</comment>
<comment type="interaction">
    <interactant intactId="EBI-2432309">
        <id>Q92876</id>
    </interactant>
    <interactant intactId="EBI-752102">
        <id>Q8WVP5</id>
        <label>TNFAIP8L1</label>
    </interactant>
    <organismsDiffer>false</organismsDiffer>
    <experiments>3</experiments>
</comment>
<comment type="interaction">
    <interactant intactId="EBI-2432309">
        <id>Q92876</id>
    </interactant>
    <interactant intactId="EBI-2509913">
        <id>Q96KP6</id>
        <label>TNIP3</label>
    </interactant>
    <organismsDiffer>false</organismsDiffer>
    <experiments>3</experiments>
</comment>
<comment type="interaction">
    <interactant intactId="EBI-2432309">
        <id>Q92876</id>
    </interactant>
    <interactant intactId="EBI-12076664">
        <id>O14787-2</id>
        <label>TNPO2</label>
    </interactant>
    <organismsDiffer>false</organismsDiffer>
    <experiments>3</experiments>
</comment>
<comment type="interaction">
    <interactant intactId="EBI-2432309">
        <id>Q92876</id>
    </interactant>
    <interactant intactId="EBI-9088321">
        <id>O94900</id>
        <label>TOX</label>
    </interactant>
    <organismsDiffer>false</organismsDiffer>
    <experiments>3</experiments>
</comment>
<comment type="interaction">
    <interactant intactId="EBI-2432309">
        <id>Q92876</id>
    </interactant>
    <interactant intactId="EBI-10977875">
        <id>P06753-2</id>
        <label>TPM3</label>
    </interactant>
    <organismsDiffer>false</organismsDiffer>
    <experiments>3</experiments>
</comment>
<comment type="interaction">
    <interactant intactId="EBI-2432309">
        <id>Q92876</id>
    </interactant>
    <interactant intactId="EBI-12581310">
        <id>Q9NX07</id>
        <label>TRNAU1AP</label>
    </interactant>
    <organismsDiffer>false</organismsDiffer>
    <experiments>3</experiments>
</comment>
<comment type="interaction">
    <interactant intactId="EBI-2432309">
        <id>Q92876</id>
    </interactant>
    <interactant intactId="EBI-3914288">
        <id>O60636</id>
        <label>TSPAN2</label>
    </interactant>
    <organismsDiffer>false</organismsDiffer>
    <experiments>3</experiments>
</comment>
<comment type="interaction">
    <interactant intactId="EBI-2432309">
        <id>Q92876</id>
    </interactant>
    <interactant intactId="EBI-12045841">
        <id>Q86UF1</id>
        <label>TSPAN33</label>
    </interactant>
    <organismsDiffer>false</organismsDiffer>
    <experiments>3</experiments>
</comment>
<comment type="interaction">
    <interactant intactId="EBI-2432309">
        <id>Q92876</id>
    </interactant>
    <interactant intactId="EBI-9088812">
        <id>Q5VYS8-5</id>
        <label>TUT7</label>
    </interactant>
    <organismsDiffer>false</organismsDiffer>
    <experiments>3</experiments>
</comment>
<comment type="interaction">
    <interactant intactId="EBI-2432309">
        <id>Q92876</id>
    </interactant>
    <interactant intactId="EBI-10304067">
        <id>Q9GZX9</id>
        <label>TWSG1</label>
    </interactant>
    <organismsDiffer>false</organismsDiffer>
    <experiments>3</experiments>
</comment>
<comment type="interaction">
    <interactant intactId="EBI-2432309">
        <id>Q92876</id>
    </interactant>
    <interactant intactId="EBI-1050671">
        <id>Q13404</id>
        <label>UBE2V1</label>
    </interactant>
    <organismsDiffer>false</organismsDiffer>
    <experiments>3</experiments>
</comment>
<comment type="interaction">
    <interactant intactId="EBI-2432309">
        <id>Q92876</id>
    </interactant>
    <interactant intactId="EBI-12817837">
        <id>Q9H9P5-5</id>
        <label>UNKL</label>
    </interactant>
    <organismsDiffer>false</organismsDiffer>
    <experiments>3</experiments>
</comment>
<comment type="interaction">
    <interactant intactId="EBI-2432309">
        <id>Q92876</id>
    </interactant>
    <interactant intactId="EBI-11911675">
        <id>Q9NVA1</id>
        <label>UQCC1</label>
    </interactant>
    <organismsDiffer>false</organismsDiffer>
    <experiments>3</experiments>
</comment>
<comment type="interaction">
    <interactant intactId="EBI-2432309">
        <id>Q92876</id>
    </interactant>
    <interactant intactId="EBI-540834">
        <id>P61964</id>
        <label>WDR5</label>
    </interactant>
    <organismsDiffer>false</organismsDiffer>
    <experiments>3</experiments>
</comment>
<comment type="interaction">
    <interactant intactId="EBI-2432309">
        <id>Q92876</id>
    </interactant>
    <interactant intactId="EBI-12040603">
        <id>Q9NZC7-5</id>
        <label>WWOX</label>
    </interactant>
    <organismsDiffer>false</organismsDiffer>
    <experiments>3</experiments>
</comment>
<comment type="interaction">
    <interactant intactId="EBI-2432309">
        <id>Q92876</id>
    </interactant>
    <interactant intactId="EBI-743923">
        <id>O00308</id>
        <label>WWP2</label>
    </interactant>
    <organismsDiffer>false</organismsDiffer>
    <experiments>3</experiments>
</comment>
<comment type="interaction">
    <interactant intactId="EBI-2432309">
        <id>Q92876</id>
    </interactant>
    <interactant intactId="EBI-517949">
        <id>Q9HAV4</id>
        <label>XPO5</label>
    </interactant>
    <organismsDiffer>false</organismsDiffer>
    <experiments>3</experiments>
</comment>
<comment type="interaction">
    <interactant intactId="EBI-2432309">
        <id>Q92876</id>
    </interactant>
    <interactant intactId="EBI-12010736">
        <id>Q8N0Y2-2</id>
        <label>ZNF444</label>
    </interactant>
    <organismsDiffer>false</organismsDiffer>
    <experiments>3</experiments>
</comment>
<comment type="interaction">
    <interactant intactId="EBI-2432309">
        <id>Q92876</id>
    </interactant>
    <interactant intactId="EBI-9088990">
        <id>Q7Z783</id>
    </interactant>
    <organismsDiffer>false</organismsDiffer>
    <experiments>3</experiments>
</comment>
<comment type="interaction">
    <interactant intactId="EBI-2432309">
        <id>Q92876</id>
    </interactant>
    <interactant intactId="EBI-750454">
        <id>Q96EJ4</id>
    </interactant>
    <organismsDiffer>false</organismsDiffer>
    <experiments>3</experiments>
</comment>
<comment type="subcellular location">
    <subcellularLocation>
        <location>Secreted</location>
    </subcellularLocation>
    <subcellularLocation>
        <location>Nucleus</location>
        <location>Nucleolus</location>
    </subcellularLocation>
    <subcellularLocation>
        <location>Cytoplasm</location>
    </subcellularLocation>
    <subcellularLocation>
        <location>Mitochondrion</location>
    </subcellularLocation>
    <subcellularLocation>
        <location>Microsome</location>
    </subcellularLocation>
    <text>In brain, detected in the nucleus of glial cells and in the nucleus and cytoplasm of neurons. Detected in the mitochondrial and microsomal fractions of HEK-293 cells and released into the cytoplasm following cell stress.</text>
</comment>
<comment type="alternative products">
    <event type="alternative splicing"/>
    <isoform>
        <id>Q92876-1</id>
        <name>1</name>
        <sequence type="displayed"/>
    </isoform>
    <isoform>
        <id>Q92876-2</id>
        <name>2</name>
        <sequence type="described" ref="VSP_034403"/>
    </isoform>
    <isoform>
        <id>Q92876-3</id>
        <name>3</name>
        <sequence type="described" ref="VSP_034404 VSP_034405"/>
    </isoform>
</comment>
<comment type="tissue specificity">
    <text evidence="3 4 5 9 12">In fluids, highest levels found in milk of lactating women followed by cerebrospinal fluid, nipple aspirate fluid and breast cyst fluid. Also found in serum, seminal plasma and some amniotic fluids and breast tumor cytosolic extracts. Not detected in urine. At the tissue level, highest concentrations found in glandular tissues such as salivary glands followed by lung, colon, fallopian tube, placenta, breast, pituitary and kidney. Not detected in skin, spleen, bone, thyroid, heart, ureter, liver, muscle, endometrium, testis, pancreas, seminal vesicle, ovary, adrenals and prostate. In brain, detected in gray matter neurons (at protein level). Colocalizes with pathological inclusions such as Lewy bodies and glial cytoplasmic inclusions. Overexpressed in primary breast tumors but not expressed in metastatic tumors.</text>
</comment>
<comment type="induction">
    <text evidence="13">By spinal cord injury. This effect is particularly prominent in macrophages, microglia and reactive astrocytes.</text>
</comment>
<comment type="PTM">
    <text>Inactivated by autolytic cleavage after Arg-80.</text>
</comment>
<comment type="mass spectrometry" mass="25866.0" method="MALDI" evidence="6"/>
<comment type="similarity">
    <text evidence="2">Belongs to the peptidase S1 family. Kallikrein subfamily.</text>
</comment>
<reference key="1">
    <citation type="journal article" date="1996" name="Mol. Med.">
        <title>A novel protease homolog differentially expressed in breast and ovarian cancer.</title>
        <authorList>
            <person name="Anisowicz A."/>
            <person name="Sotiropoulou G."/>
            <person name="Stenman G."/>
            <person name="Mok S.C."/>
            <person name="Sager R."/>
        </authorList>
    </citation>
    <scope>NUCLEOTIDE SEQUENCE [MRNA] (ISOFORM 1)</scope>
</reference>
<reference key="2">
    <citation type="journal article" date="1997" name="Biochim. Biophys. Acta">
        <title>Molecular cloning of a novel trypsin-like serine protease (neurosin) preferentially expressed in brain.</title>
        <authorList>
            <person name="Yamashiro K."/>
            <person name="Tsuruoka N."/>
            <person name="Kodama S."/>
            <person name="Tsujimoto M."/>
            <person name="Yamamura Y."/>
            <person name="Tanaka T."/>
            <person name="Nakazato H."/>
            <person name="Yamaguchi N."/>
        </authorList>
    </citation>
    <scope>NUCLEOTIDE SEQUENCE [MRNA] (ISOFORM 1)</scope>
    <source>
        <tissue>Colon</tissue>
    </source>
</reference>
<reference key="3">
    <citation type="journal article" date="1997" name="J. Biol. Chem.">
        <title>Zyme, a novel and potentially amyloidogenic enzyme cDNA isolated from Alzheimer's disease brain.</title>
        <authorList>
            <person name="Little S.P."/>
            <person name="Dixon E.P."/>
            <person name="Norris F."/>
            <person name="Buckley W."/>
            <person name="Becker G.W."/>
            <person name="Johnson M."/>
            <person name="Dobbins J.R."/>
            <person name="Wyrick T."/>
            <person name="Miller J.R."/>
            <person name="Mackellar W."/>
            <person name="Hepburn D."/>
            <person name="Corvalan J."/>
            <person name="McClure D."/>
            <person name="Liu X."/>
            <person name="Stephenson D."/>
            <person name="Clemens J."/>
            <person name="Johnstone E.M."/>
        </authorList>
    </citation>
    <scope>NUCLEOTIDE SEQUENCE [MRNA] (ISOFORM 1)</scope>
    <source>
        <tissue>Brain</tissue>
    </source>
</reference>
<reference key="4">
    <citation type="journal article" date="1999" name="Genomics">
        <title>Molecular characterization of Zyme/protease M/neurosin(PRSS9), a hormonally regulated kallikrein-like serine protease.</title>
        <authorList>
            <person name="Yousef G.M."/>
            <person name="Luo L.Y."/>
            <person name="Scherer S.W."/>
            <person name="Sotiropoulou G."/>
            <person name="Diamandis E.P."/>
        </authorList>
    </citation>
    <scope>NUCLEOTIDE SEQUENCE [GENOMIC DNA]</scope>
</reference>
<reference key="5">
    <citation type="journal article" date="2000" name="Gene">
        <title>Sequencing and expression analysis of the serine protease gene cluster located in chromosome 19q13 region.</title>
        <authorList>
            <person name="Gan L."/>
            <person name="Lee I."/>
            <person name="Smith R."/>
            <person name="Argonza-Barrett R."/>
            <person name="Lei H."/>
            <person name="McCuaig J."/>
            <person name="Moss P."/>
            <person name="Paeper B."/>
            <person name="Wang K."/>
        </authorList>
    </citation>
    <scope>NUCLEOTIDE SEQUENCE [GENOMIC DNA]</scope>
</reference>
<reference key="6">
    <citation type="journal article" date="2004" name="Biochem. Biophys. Res. Commun.">
        <title>Cloning and characterization of novel isoforms of the human kallikrein 6 gene.</title>
        <authorList>
            <person name="Pampalakis G."/>
            <person name="Kurlender L."/>
            <person name="Diamandis E.P."/>
            <person name="Sotiropoulou G."/>
        </authorList>
    </citation>
    <scope>NUCLEOTIDE SEQUENCE [MRNA] (ISOFORMS 1; 2 AND 3)</scope>
    <source>
        <tissue>Testis</tissue>
    </source>
</reference>
<reference key="7">
    <citation type="journal article" date="2006" name="Biol. Chem.">
        <title>Multiple mechanisms underlie the aberrant expression of the human kallikrein 6 gene in breast cancer.</title>
        <authorList>
            <person name="Pampalakis G."/>
            <person name="Sotiropoulou G."/>
        </authorList>
    </citation>
    <scope>NUCLEOTIDE SEQUENCE [MRNA] (ISOFORM 1)</scope>
    <scope>TISSUE SPECIFICITY</scope>
</reference>
<reference key="8">
    <citation type="journal article" date="2004" name="Nat. Genet.">
        <title>Complete sequencing and characterization of 21,243 full-length human cDNAs.</title>
        <authorList>
            <person name="Ota T."/>
            <person name="Suzuki Y."/>
            <person name="Nishikawa T."/>
            <person name="Otsuki T."/>
            <person name="Sugiyama T."/>
            <person name="Irie R."/>
            <person name="Wakamatsu A."/>
            <person name="Hayashi K."/>
            <person name="Sato H."/>
            <person name="Nagai K."/>
            <person name="Kimura K."/>
            <person name="Makita H."/>
            <person name="Sekine M."/>
            <person name="Obayashi M."/>
            <person name="Nishi T."/>
            <person name="Shibahara T."/>
            <person name="Tanaka T."/>
            <person name="Ishii S."/>
            <person name="Yamamoto J."/>
            <person name="Saito K."/>
            <person name="Kawai Y."/>
            <person name="Isono Y."/>
            <person name="Nakamura Y."/>
            <person name="Nagahari K."/>
            <person name="Murakami K."/>
            <person name="Yasuda T."/>
            <person name="Iwayanagi T."/>
            <person name="Wagatsuma M."/>
            <person name="Shiratori A."/>
            <person name="Sudo H."/>
            <person name="Hosoiri T."/>
            <person name="Kaku Y."/>
            <person name="Kodaira H."/>
            <person name="Kondo H."/>
            <person name="Sugawara M."/>
            <person name="Takahashi M."/>
            <person name="Kanda K."/>
            <person name="Yokoi T."/>
            <person name="Furuya T."/>
            <person name="Kikkawa E."/>
            <person name="Omura Y."/>
            <person name="Abe K."/>
            <person name="Kamihara K."/>
            <person name="Katsuta N."/>
            <person name="Sato K."/>
            <person name="Tanikawa M."/>
            <person name="Yamazaki M."/>
            <person name="Ninomiya K."/>
            <person name="Ishibashi T."/>
            <person name="Yamashita H."/>
            <person name="Murakawa K."/>
            <person name="Fujimori K."/>
            <person name="Tanai H."/>
            <person name="Kimata M."/>
            <person name="Watanabe M."/>
            <person name="Hiraoka S."/>
            <person name="Chiba Y."/>
            <person name="Ishida S."/>
            <person name="Ono Y."/>
            <person name="Takiguchi S."/>
            <person name="Watanabe S."/>
            <person name="Yosida M."/>
            <person name="Hotuta T."/>
            <person name="Kusano J."/>
            <person name="Kanehori K."/>
            <person name="Takahashi-Fujii A."/>
            <person name="Hara H."/>
            <person name="Tanase T.-O."/>
            <person name="Nomura Y."/>
            <person name="Togiya S."/>
            <person name="Komai F."/>
            <person name="Hara R."/>
            <person name="Takeuchi K."/>
            <person name="Arita M."/>
            <person name="Imose N."/>
            <person name="Musashino K."/>
            <person name="Yuuki H."/>
            <person name="Oshima A."/>
            <person name="Sasaki N."/>
            <person name="Aotsuka S."/>
            <person name="Yoshikawa Y."/>
            <person name="Matsunawa H."/>
            <person name="Ichihara T."/>
            <person name="Shiohata N."/>
            <person name="Sano S."/>
            <person name="Moriya S."/>
            <person name="Momiyama H."/>
            <person name="Satoh N."/>
            <person name="Takami S."/>
            <person name="Terashima Y."/>
            <person name="Suzuki O."/>
            <person name="Nakagawa S."/>
            <person name="Senoh A."/>
            <person name="Mizoguchi H."/>
            <person name="Goto Y."/>
            <person name="Shimizu F."/>
            <person name="Wakebe H."/>
            <person name="Hishigaki H."/>
            <person name="Watanabe T."/>
            <person name="Sugiyama A."/>
            <person name="Takemoto M."/>
            <person name="Kawakami B."/>
            <person name="Yamazaki M."/>
            <person name="Watanabe K."/>
            <person name="Kumagai A."/>
            <person name="Itakura S."/>
            <person name="Fukuzumi Y."/>
            <person name="Fujimori Y."/>
            <person name="Komiyama M."/>
            <person name="Tashiro H."/>
            <person name="Tanigami A."/>
            <person name="Fujiwara T."/>
            <person name="Ono T."/>
            <person name="Yamada K."/>
            <person name="Fujii Y."/>
            <person name="Ozaki K."/>
            <person name="Hirao M."/>
            <person name="Ohmori Y."/>
            <person name="Kawabata A."/>
            <person name="Hikiji T."/>
            <person name="Kobatake N."/>
            <person name="Inagaki H."/>
            <person name="Ikema Y."/>
            <person name="Okamoto S."/>
            <person name="Okitani R."/>
            <person name="Kawakami T."/>
            <person name="Noguchi S."/>
            <person name="Itoh T."/>
            <person name="Shigeta K."/>
            <person name="Senba T."/>
            <person name="Matsumura K."/>
            <person name="Nakajima Y."/>
            <person name="Mizuno T."/>
            <person name="Morinaga M."/>
            <person name="Sasaki M."/>
            <person name="Togashi T."/>
            <person name="Oyama M."/>
            <person name="Hata H."/>
            <person name="Watanabe M."/>
            <person name="Komatsu T."/>
            <person name="Mizushima-Sugano J."/>
            <person name="Satoh T."/>
            <person name="Shirai Y."/>
            <person name="Takahashi Y."/>
            <person name="Nakagawa K."/>
            <person name="Okumura K."/>
            <person name="Nagase T."/>
            <person name="Nomura N."/>
            <person name="Kikuchi H."/>
            <person name="Masuho Y."/>
            <person name="Yamashita R."/>
            <person name="Nakai K."/>
            <person name="Yada T."/>
            <person name="Nakamura Y."/>
            <person name="Ohara O."/>
            <person name="Isogai T."/>
            <person name="Sugano S."/>
        </authorList>
    </citation>
    <scope>NUCLEOTIDE SEQUENCE [LARGE SCALE MRNA]</scope>
</reference>
<reference key="9">
    <citation type="submission" date="2004-10" db="EMBL/GenBank/DDBJ databases">
        <title>Cloning of human full-length CDSs in BD Creator(TM) system donor vector.</title>
        <authorList>
            <person name="Kalnine N."/>
            <person name="Chen X."/>
            <person name="Rolfs A."/>
            <person name="Halleck A."/>
            <person name="Hines L."/>
            <person name="Eisenstein S."/>
            <person name="Koundinya M."/>
            <person name="Raphael J."/>
            <person name="Moreira D."/>
            <person name="Kelley T."/>
            <person name="LaBaer J."/>
            <person name="Lin Y."/>
            <person name="Phelan M."/>
            <person name="Farmer A."/>
        </authorList>
    </citation>
    <scope>NUCLEOTIDE SEQUENCE [LARGE SCALE MRNA] (ISOFORM 1)</scope>
</reference>
<reference key="10">
    <citation type="journal article" date="2004" name="Nature">
        <title>The DNA sequence and biology of human chromosome 19.</title>
        <authorList>
            <person name="Grimwood J."/>
            <person name="Gordon L.A."/>
            <person name="Olsen A.S."/>
            <person name="Terry A."/>
            <person name="Schmutz J."/>
            <person name="Lamerdin J.E."/>
            <person name="Hellsten U."/>
            <person name="Goodstein D."/>
            <person name="Couronne O."/>
            <person name="Tran-Gyamfi M."/>
            <person name="Aerts A."/>
            <person name="Altherr M."/>
            <person name="Ashworth L."/>
            <person name="Bajorek E."/>
            <person name="Black S."/>
            <person name="Branscomb E."/>
            <person name="Caenepeel S."/>
            <person name="Carrano A.V."/>
            <person name="Caoile C."/>
            <person name="Chan Y.M."/>
            <person name="Christensen M."/>
            <person name="Cleland C.A."/>
            <person name="Copeland A."/>
            <person name="Dalin E."/>
            <person name="Dehal P."/>
            <person name="Denys M."/>
            <person name="Detter J.C."/>
            <person name="Escobar J."/>
            <person name="Flowers D."/>
            <person name="Fotopulos D."/>
            <person name="Garcia C."/>
            <person name="Georgescu A.M."/>
            <person name="Glavina T."/>
            <person name="Gomez M."/>
            <person name="Gonzales E."/>
            <person name="Groza M."/>
            <person name="Hammon N."/>
            <person name="Hawkins T."/>
            <person name="Haydu L."/>
            <person name="Ho I."/>
            <person name="Huang W."/>
            <person name="Israni S."/>
            <person name="Jett J."/>
            <person name="Kadner K."/>
            <person name="Kimball H."/>
            <person name="Kobayashi A."/>
            <person name="Larionov V."/>
            <person name="Leem S.-H."/>
            <person name="Lopez F."/>
            <person name="Lou Y."/>
            <person name="Lowry S."/>
            <person name="Malfatti S."/>
            <person name="Martinez D."/>
            <person name="McCready P.M."/>
            <person name="Medina C."/>
            <person name="Morgan J."/>
            <person name="Nelson K."/>
            <person name="Nolan M."/>
            <person name="Ovcharenko I."/>
            <person name="Pitluck S."/>
            <person name="Pollard M."/>
            <person name="Popkie A.P."/>
            <person name="Predki P."/>
            <person name="Quan G."/>
            <person name="Ramirez L."/>
            <person name="Rash S."/>
            <person name="Retterer J."/>
            <person name="Rodriguez A."/>
            <person name="Rogers S."/>
            <person name="Salamov A."/>
            <person name="Salazar A."/>
            <person name="She X."/>
            <person name="Smith D."/>
            <person name="Slezak T."/>
            <person name="Solovyev V."/>
            <person name="Thayer N."/>
            <person name="Tice H."/>
            <person name="Tsai M."/>
            <person name="Ustaszewska A."/>
            <person name="Vo N."/>
            <person name="Wagner M."/>
            <person name="Wheeler J."/>
            <person name="Wu K."/>
            <person name="Xie G."/>
            <person name="Yang J."/>
            <person name="Dubchak I."/>
            <person name="Furey T.S."/>
            <person name="DeJong P."/>
            <person name="Dickson M."/>
            <person name="Gordon D."/>
            <person name="Eichler E.E."/>
            <person name="Pennacchio L.A."/>
            <person name="Richardson P."/>
            <person name="Stubbs L."/>
            <person name="Rokhsar D.S."/>
            <person name="Myers R.M."/>
            <person name="Rubin E.M."/>
            <person name="Lucas S.M."/>
        </authorList>
    </citation>
    <scope>NUCLEOTIDE SEQUENCE [LARGE SCALE GENOMIC DNA]</scope>
</reference>
<reference key="11">
    <citation type="submission" date="2005-07" db="EMBL/GenBank/DDBJ databases">
        <authorList>
            <person name="Mural R.J."/>
            <person name="Istrail S."/>
            <person name="Sutton G.G."/>
            <person name="Florea L."/>
            <person name="Halpern A.L."/>
            <person name="Mobarry C.M."/>
            <person name="Lippert R."/>
            <person name="Walenz B."/>
            <person name="Shatkay H."/>
            <person name="Dew I."/>
            <person name="Miller J.R."/>
            <person name="Flanigan M.J."/>
            <person name="Edwards N.J."/>
            <person name="Bolanos R."/>
            <person name="Fasulo D."/>
            <person name="Halldorsson B.V."/>
            <person name="Hannenhalli S."/>
            <person name="Turner R."/>
            <person name="Yooseph S."/>
            <person name="Lu F."/>
            <person name="Nusskern D.R."/>
            <person name="Shue B.C."/>
            <person name="Zheng X.H."/>
            <person name="Zhong F."/>
            <person name="Delcher A.L."/>
            <person name="Huson D.H."/>
            <person name="Kravitz S.A."/>
            <person name="Mouchard L."/>
            <person name="Reinert K."/>
            <person name="Remington K.A."/>
            <person name="Clark A.G."/>
            <person name="Waterman M.S."/>
            <person name="Eichler E.E."/>
            <person name="Adams M.D."/>
            <person name="Hunkapiller M.W."/>
            <person name="Myers E.W."/>
            <person name="Venter J.C."/>
        </authorList>
    </citation>
    <scope>NUCLEOTIDE SEQUENCE [LARGE SCALE GENOMIC DNA]</scope>
</reference>
<reference key="12">
    <citation type="journal article" date="2004" name="Genome Res.">
        <title>The status, quality, and expansion of the NIH full-length cDNA project: the Mammalian Gene Collection (MGC).</title>
        <authorList>
            <consortium name="The MGC Project Team"/>
        </authorList>
    </citation>
    <scope>NUCLEOTIDE SEQUENCE [LARGE SCALE MRNA] (ISOFORM 1)</scope>
    <source>
        <tissue>Colon</tissue>
    </source>
</reference>
<reference key="13">
    <citation type="journal article" date="2000" name="Clin. Biochem.">
        <title>Immunofluorometric assay of human kallikrein 6 (zyme/protease M/neurosin) and preliminary clinical applications.</title>
        <authorList>
            <person name="Diamandis E.P."/>
            <person name="Yousef G.M."/>
            <person name="Soosaipillai A.R."/>
            <person name="Grass L."/>
            <person name="Porter A."/>
            <person name="Little S."/>
            <person name="Sotiropoulou G."/>
        </authorList>
    </citation>
    <scope>SUBCELLULAR LOCATION</scope>
    <scope>TISSUE SPECIFICITY</scope>
</reference>
<reference key="14">
    <citation type="journal article" date="2000" name="Psychiatry Clin. Neurosci.">
        <title>Localization of a novel type trypsin-like serine protease, neurosin, in brain tissues of Alzheimer's disease and Parkinson's disease.</title>
        <authorList>
            <person name="Ogawa K."/>
            <person name="Yamada T."/>
            <person name="Tsujioka Y."/>
            <person name="Taguchi J."/>
            <person name="Takahashi M."/>
            <person name="Tsuboi Y."/>
            <person name="Fujino Y."/>
            <person name="Nakajima M."/>
            <person name="Yamamoto T."/>
            <person name="Akatsu H."/>
            <person name="Mitsui S."/>
            <person name="Yamaguchi N."/>
        </authorList>
    </citation>
    <scope>SUBCELLULAR LOCATION</scope>
    <scope>TISSUE SPECIFICITY</scope>
</reference>
<reference key="15">
    <citation type="journal article" date="2001" name="J. Histochem. Cytochem.">
        <title>The spectrum of human kallikrein 6 (zyme/protease M/neurosin) expression in human tissues as assessed by immunohistochemistry.</title>
        <authorList>
            <person name="Petraki C.D."/>
            <person name="Karavana V.N."/>
            <person name="Skoufogiannis P.T."/>
            <person name="Little S.P."/>
            <person name="Howarth D.J.C."/>
            <person name="Yousef G.M."/>
            <person name="Diamandis E.P."/>
        </authorList>
    </citation>
    <scope>TISSUE SPECIFICITY</scope>
</reference>
<reference key="16">
    <citation type="journal article" date="2003" name="Biochem. Biophys. Res. Commun.">
        <title>Characterization of the enzymatic activity of human kallikrein 6: autoactivation, substrate specificity, and regulation by inhibitors.</title>
        <authorList>
            <person name="Magklara A."/>
            <person name="Mellati A.A."/>
            <person name="Wasney G.A."/>
            <person name="Little S.P."/>
            <person name="Sotiropoulou G."/>
            <person name="Becker G.W."/>
            <person name="Diamandis E.P."/>
        </authorList>
    </citation>
    <scope>FUNCTION</scope>
    <scope>ACTIVITY REGULATION</scope>
    <scope>BIOPHYSICOCHEMICAL PROPERTIES</scope>
    <scope>AUTOCATALYTIC CLEAVAGE</scope>
</reference>
<reference key="17">
    <citation type="journal article" date="2003" name="Hum. Mol. Genet.">
        <title>Alpha-synuclein degradation by serine protease neurosin: implication for pathogenesis of synucleinopathies.</title>
        <authorList>
            <person name="Iwata A."/>
            <person name="Maruyama M."/>
            <person name="Akagi T."/>
            <person name="Hashikawa T."/>
            <person name="Kanazawa I."/>
            <person name="Tsuji S."/>
            <person name="Nukina N."/>
        </authorList>
    </citation>
    <scope>FUNCTION</scope>
    <scope>SUBCELLULAR LOCATION</scope>
    <scope>TISSUE SPECIFICITY</scope>
</reference>
<reference key="18">
    <citation type="journal article" date="2004" name="Tumor Biol.">
        <title>Human kallikrein 6 degrades extracellular matrix proteins and may enhance the metastatic potential of tumour cells.</title>
        <authorList>
            <person name="Ghosh M.C."/>
            <person name="Grass L."/>
            <person name="Soosaipillai A."/>
            <person name="Sotiropoulou G."/>
            <person name="Diamandis E.P."/>
        </authorList>
    </citation>
    <scope>FUNCTION</scope>
</reference>
<reference key="19">
    <citation type="journal article" date="2006" name="Eur. J. Neurosci.">
        <title>Dynamic role of kallikrein 6 in traumatic spinal cord injury.</title>
        <authorList>
            <person name="Scarisbrick I.A."/>
            <person name="Sabharwal P."/>
            <person name="Cruz H."/>
            <person name="Larsen N."/>
            <person name="Vandell A.G."/>
            <person name="Blaber S.I."/>
            <person name="Ameenuddin S."/>
            <person name="Papke L.M."/>
            <person name="Fehlings M.G."/>
            <person name="Reeves R.K."/>
            <person name="Blaber M."/>
            <person name="Windebank A.J."/>
            <person name="Rodriguez M."/>
        </authorList>
    </citation>
    <scope>FUNCTION</scope>
    <scope>INDUCTION</scope>
</reference>
<reference key="20">
    <citation type="journal article" date="2006" name="J. Biol. Chem.">
        <title>Substrate specificity of human kallikrein 6: salt and glycosaminoglycan activation effects.</title>
        <authorList>
            <person name="Angelo P.F."/>
            <person name="Lima A.R."/>
            <person name="Alves F.M."/>
            <person name="Blaber S.I."/>
            <person name="Scarisbrick I.A."/>
            <person name="Blaber M."/>
            <person name="Juliano L."/>
            <person name="Juliano M.A."/>
        </authorList>
    </citation>
    <scope>FUNCTION</scope>
    <scope>ACTIVITY REGULATION</scope>
</reference>
<reference key="21">
    <citation type="journal article" date="2007" name="Biochemistry">
        <title>The autolytic regulation of human kallikrein-related peptidase 6.</title>
        <authorList>
            <person name="Blaber S.I."/>
            <person name="Yoon H."/>
            <person name="Scarisbrick I.A."/>
            <person name="Juliano M.A."/>
            <person name="Blaber M."/>
        </authorList>
    </citation>
    <scope>AUTOCATALYTIC CLEAVAGE</scope>
</reference>
<reference key="22">
    <citation type="journal article" date="2002" name="J. Biol. Chem.">
        <title>The structure of human prokallikrein 6 reveals a novel activation mechanism for the kallikrein family.</title>
        <authorList>
            <person name="Gomis-Rueth F.X."/>
            <person name="Bayes A."/>
            <person name="Sotiropoulou G."/>
            <person name="Pampalakis G."/>
            <person name="Tsetsenis T."/>
            <person name="Villegas V."/>
            <person name="Aviles F.X."/>
            <person name="Coll M."/>
        </authorList>
    </citation>
    <scope>X-RAY CRYSTALLOGRAPHY (1.80 ANGSTROMS) OF 21-243</scope>
    <scope>AUTOCATALYTIC CLEAVAGE</scope>
    <scope>ACTIVE SITES</scope>
    <scope>DISULFIDE BONDS</scope>
</reference>
<reference key="23">
    <citation type="journal article" date="2002" name="J. Biol. Chem.">
        <title>Crystal structure and biochemical characterization of human kallikrein 6 reveals that a trypsin-like kallikrein is expressed in the central nervous system.</title>
        <authorList>
            <person name="Bernett M.J."/>
            <person name="Blaber S.I."/>
            <person name="Scarisbrick I.A."/>
            <person name="Dhanarajan P."/>
            <person name="Thompson S.M."/>
            <person name="Blaber M."/>
        </authorList>
    </citation>
    <scope>X-RAY CRYSTALLOGRAPHY (1.75 ANGSTROMS) OF 22-244</scope>
    <scope>PROTEIN SEQUENCE OF 22-25</scope>
    <scope>FUNCTION</scope>
    <scope>BIOPHYSICOCHEMICAL PROPERTIES</scope>
    <scope>AUTOCATALYTIC CLEAVAGE</scope>
    <scope>DISULFIDE BONDS</scope>
    <scope>MASS SPECTROMETRY</scope>
</reference>
<proteinExistence type="evidence at protein level"/>
<gene>
    <name type="primary">KLK6</name>
    <name type="synonym">PRSS18</name>
    <name type="synonym">PRSS9</name>
</gene>
<evidence type="ECO:0000255" key="1"/>
<evidence type="ECO:0000255" key="2">
    <source>
        <dbReference type="PROSITE-ProRule" id="PRU00274"/>
    </source>
</evidence>
<evidence type="ECO:0000269" key="3">
    <source>
    </source>
</evidence>
<evidence type="ECO:0000269" key="4">
    <source>
    </source>
</evidence>
<evidence type="ECO:0000269" key="5">
    <source>
    </source>
</evidence>
<evidence type="ECO:0000269" key="6">
    <source>
    </source>
</evidence>
<evidence type="ECO:0000269" key="7">
    <source>
    </source>
</evidence>
<evidence type="ECO:0000269" key="8">
    <source>
    </source>
</evidence>
<evidence type="ECO:0000269" key="9">
    <source>
    </source>
</evidence>
<evidence type="ECO:0000269" key="10">
    <source>
    </source>
</evidence>
<evidence type="ECO:0000269" key="11">
    <source>
    </source>
</evidence>
<evidence type="ECO:0000269" key="12">
    <source>
    </source>
</evidence>
<evidence type="ECO:0000269" key="13">
    <source>
    </source>
</evidence>
<evidence type="ECO:0000303" key="14">
    <source>
    </source>
</evidence>
<evidence type="ECO:0007829" key="15">
    <source>
        <dbReference type="PDB" id="1GVL"/>
    </source>
</evidence>
<evidence type="ECO:0007829" key="16">
    <source>
        <dbReference type="PDB" id="1LO6"/>
    </source>
</evidence>
<evidence type="ECO:0007829" key="17">
    <source>
        <dbReference type="PDB" id="7QFT"/>
    </source>
</evidence>
<evidence type="ECO:0007829" key="18">
    <source>
        <dbReference type="PDB" id="7QI0"/>
    </source>
</evidence>
<feature type="signal peptide" evidence="1">
    <location>
        <begin position="1"/>
        <end position="16"/>
    </location>
</feature>
<feature type="propeptide" id="PRO_0000027940" description="Activation peptide" evidence="1">
    <location>
        <begin position="17"/>
        <end position="21"/>
    </location>
</feature>
<feature type="chain" id="PRO_0000027941" description="Kallikrein-6">
    <location>
        <begin position="22"/>
        <end position="244"/>
    </location>
</feature>
<feature type="domain" description="Peptidase S1" evidence="2">
    <location>
        <begin position="22"/>
        <end position="242"/>
    </location>
</feature>
<feature type="active site" description="Charge relay system" evidence="7">
    <location>
        <position position="62"/>
    </location>
</feature>
<feature type="active site" description="Charge relay system" evidence="7">
    <location>
        <position position="106"/>
    </location>
</feature>
<feature type="active site" description="Charge relay system" evidence="7">
    <location>
        <position position="197"/>
    </location>
</feature>
<feature type="site" description="Cleavage; by autolysis">
    <location>
        <begin position="80"/>
        <end position="81"/>
    </location>
</feature>
<feature type="glycosylation site" description="N-linked (GlcNAc...) asparagine" evidence="1">
    <location>
        <position position="134"/>
    </location>
</feature>
<feature type="disulfide bond">
    <location>
        <begin position="28"/>
        <end position="157"/>
    </location>
</feature>
<feature type="disulfide bond">
    <location>
        <begin position="47"/>
        <end position="63"/>
    </location>
</feature>
<feature type="disulfide bond">
    <location>
        <begin position="131"/>
        <end position="231"/>
    </location>
</feature>
<feature type="disulfide bond">
    <location>
        <begin position="138"/>
        <end position="203"/>
    </location>
</feature>
<feature type="disulfide bond">
    <location>
        <begin position="168"/>
        <end position="182"/>
    </location>
</feature>
<feature type="disulfide bond">
    <location>
        <begin position="193"/>
        <end position="218"/>
    </location>
</feature>
<feature type="splice variant" id="VSP_034403" description="In isoform 2." evidence="14">
    <location>
        <begin position="1"/>
        <end position="107"/>
    </location>
</feature>
<feature type="splice variant" id="VSP_034404" description="In isoform 3." evidence="14">
    <original>AWAEEQNKLVHGGPCDKTSHPYQAALY</original>
    <variation>GIFRSSWGSITFGKGRVPRSRVLLSGL</variation>
    <location>
        <begin position="14"/>
        <end position="40"/>
    </location>
</feature>
<feature type="splice variant" id="VSP_034405" description="In isoform 3." evidence="14">
    <location>
        <begin position="41"/>
        <end position="244"/>
    </location>
</feature>
<feature type="sequence variant" id="VAR_061776" description="In dbSNP:rs61469141.">
    <original>R</original>
    <variation>W</variation>
    <location>
        <position position="78"/>
    </location>
</feature>
<feature type="helix" evidence="15">
    <location>
        <begin position="27"/>
        <end position="29"/>
    </location>
</feature>
<feature type="strand" evidence="17">
    <location>
        <begin position="36"/>
        <end position="41"/>
    </location>
</feature>
<feature type="strand" evidence="17">
    <location>
        <begin position="44"/>
        <end position="53"/>
    </location>
</feature>
<feature type="strand" evidence="17">
    <location>
        <begin position="56"/>
        <end position="59"/>
    </location>
</feature>
<feature type="helix" evidence="17">
    <location>
        <begin position="61"/>
        <end position="63"/>
    </location>
</feature>
<feature type="strand" evidence="17">
    <location>
        <begin position="69"/>
        <end position="73"/>
    </location>
</feature>
<feature type="strand" evidence="15">
    <location>
        <begin position="75"/>
        <end position="77"/>
    </location>
</feature>
<feature type="strand" evidence="17">
    <location>
        <begin position="85"/>
        <end position="94"/>
    </location>
</feature>
<feature type="turn" evidence="17">
    <location>
        <begin position="100"/>
        <end position="103"/>
    </location>
</feature>
<feature type="strand" evidence="17">
    <location>
        <begin position="108"/>
        <end position="114"/>
    </location>
</feature>
<feature type="strand" evidence="18">
    <location>
        <begin position="120"/>
        <end position="122"/>
    </location>
</feature>
<feature type="strand" evidence="17">
    <location>
        <begin position="137"/>
        <end position="144"/>
    </location>
</feature>
<feature type="strand" evidence="15">
    <location>
        <begin position="146"/>
        <end position="149"/>
    </location>
</feature>
<feature type="strand" evidence="17">
    <location>
        <begin position="156"/>
        <end position="163"/>
    </location>
</feature>
<feature type="helix" evidence="17">
    <location>
        <begin position="165"/>
        <end position="171"/>
    </location>
</feature>
<feature type="turn" evidence="16">
    <location>
        <begin position="173"/>
        <end position="175"/>
    </location>
</feature>
<feature type="strand" evidence="17">
    <location>
        <begin position="180"/>
        <end position="184"/>
    </location>
</feature>
<feature type="turn" evidence="17">
    <location>
        <begin position="186"/>
        <end position="188"/>
    </location>
</feature>
<feature type="turn" evidence="16">
    <location>
        <begin position="194"/>
        <end position="198"/>
    </location>
</feature>
<feature type="strand" evidence="17">
    <location>
        <begin position="200"/>
        <end position="203"/>
    </location>
</feature>
<feature type="strand" evidence="17">
    <location>
        <begin position="206"/>
        <end position="213"/>
    </location>
</feature>
<feature type="strand" evidence="17">
    <location>
        <begin position="216"/>
        <end position="218"/>
    </location>
</feature>
<feature type="strand" evidence="17">
    <location>
        <begin position="221"/>
        <end position="223"/>
    </location>
</feature>
<feature type="strand" evidence="17">
    <location>
        <begin position="225"/>
        <end position="229"/>
    </location>
</feature>
<feature type="helix" evidence="17">
    <location>
        <begin position="230"/>
        <end position="233"/>
    </location>
</feature>
<feature type="helix" evidence="17">
    <location>
        <begin position="234"/>
        <end position="242"/>
    </location>
</feature>
<name>KLK6_HUMAN</name>